<evidence type="ECO:0000250" key="1">
    <source>
        <dbReference type="UniProtKB" id="P05627"/>
    </source>
</evidence>
<evidence type="ECO:0000250" key="2">
    <source>
        <dbReference type="UniProtKB" id="P17325"/>
    </source>
</evidence>
<evidence type="ECO:0000255" key="3">
    <source>
        <dbReference type="PROSITE-ProRule" id="PRU00978"/>
    </source>
</evidence>
<evidence type="ECO:0000269" key="4">
    <source>
    </source>
</evidence>
<evidence type="ECO:0000269" key="5">
    <source>
    </source>
</evidence>
<evidence type="ECO:0000269" key="6">
    <source>
    </source>
</evidence>
<evidence type="ECO:0000269" key="7">
    <source>
    </source>
</evidence>
<evidence type="ECO:0000269" key="8">
    <source>
    </source>
</evidence>
<evidence type="ECO:0000269" key="9">
    <source>
    </source>
</evidence>
<evidence type="ECO:0000269" key="10">
    <source>
    </source>
</evidence>
<evidence type="ECO:0000269" key="11">
    <source>
    </source>
</evidence>
<evidence type="ECO:0000269" key="12">
    <source>
    </source>
</evidence>
<evidence type="ECO:0000269" key="13">
    <source>
    </source>
</evidence>
<evidence type="ECO:0000269" key="14">
    <source>
    </source>
</evidence>
<evidence type="ECO:0000269" key="15">
    <source>
    </source>
</evidence>
<evidence type="ECO:0000269" key="16">
    <source>
    </source>
</evidence>
<evidence type="ECO:0000269" key="17">
    <source>
    </source>
</evidence>
<evidence type="ECO:0000269" key="18">
    <source>
    </source>
</evidence>
<evidence type="ECO:0000269" key="19">
    <source>
    </source>
</evidence>
<evidence type="ECO:0000269" key="20">
    <source>
    </source>
</evidence>
<evidence type="ECO:0000269" key="21">
    <source>
    </source>
</evidence>
<evidence type="ECO:0000269" key="22">
    <source>
    </source>
</evidence>
<evidence type="ECO:0000269" key="23">
    <source>
    </source>
</evidence>
<evidence type="ECO:0000269" key="24">
    <source>
    </source>
</evidence>
<evidence type="ECO:0000269" key="25">
    <source>
    </source>
</evidence>
<evidence type="ECO:0000269" key="26">
    <source>
    </source>
</evidence>
<evidence type="ECO:0000269" key="27">
    <source>
    </source>
</evidence>
<evidence type="ECO:0000269" key="28">
    <source>
    </source>
</evidence>
<evidence type="ECO:0000269" key="29">
    <source>
    </source>
</evidence>
<evidence type="ECO:0000269" key="30">
    <source>
    </source>
</evidence>
<evidence type="ECO:0000269" key="31">
    <source>
    </source>
</evidence>
<evidence type="ECO:0000269" key="32">
    <source>
    </source>
</evidence>
<evidence type="ECO:0000269" key="33">
    <source>
    </source>
</evidence>
<evidence type="ECO:0000305" key="34"/>
<evidence type="ECO:0007744" key="35">
    <source>
    </source>
</evidence>
<evidence type="ECO:0007744" key="36">
    <source>
    </source>
</evidence>
<evidence type="ECO:0007744" key="37">
    <source>
    </source>
</evidence>
<evidence type="ECO:0007744" key="38">
    <source>
    </source>
</evidence>
<evidence type="ECO:0007744" key="39">
    <source>
    </source>
</evidence>
<evidence type="ECO:0007744" key="40">
    <source>
    </source>
</evidence>
<evidence type="ECO:0007829" key="41">
    <source>
        <dbReference type="PDB" id="5T01"/>
    </source>
</evidence>
<comment type="function">
    <text evidence="1 6 9 13 19 24">Transcription factor that recognizes and binds to the AP-1 consensus motif 5'-TGA[GC]TCA-3' (PubMed:10995748, PubMed:22083952). Heterodimerizes with proteins of the FOS family to form an AP-1 transcription complex, thereby enhancing its DNA binding activity to the AP-1 consensus sequence 5'-TGA[GC]TCA-3' and enhancing its transcriptional activity (By similarity). Together with FOSB, plays a role in activation-induced cell death of T cells by binding to the AP-1 promoter site of FASLG/CD95L, and inducing its transcription in response to activation of the TCR/CD3 signaling pathway (PubMed:12618758). Promotes activity of NR5A1 when phosphorylated by HIPK3 leading to increased steroidogenic gene expression upon cAMP signaling pathway stimulation (PubMed:17210646). Involved in activated KRAS-mediated transcriptional activation of USP28 in colorectal cancer (CRC) cells (PubMed:24623306). Binds to the USP28 promoter in colorectal cancer (CRC) cells (PubMed:24623306).</text>
</comment>
<comment type="function">
    <text evidence="27">(Microbial infection) Upon Epstein-Barr virus (EBV) infection, binds to viral BZLF1 Z promoter and activates viral BZLF1 expression.</text>
</comment>
<comment type="subunit">
    <text evidence="1 2 4 5 6 8 10 11 12 17 21 22 23 25 26 27 30 31 33">Heterodimer with either BATF3 or ATF7 (PubMed:10376527, PubMed:12087103, PubMed:15467742). Heterodimer with FOS (By similarity). Heterodimer with FOSB isoform 1 and 2 (By similarity). Component of an AP-1 transcription factor complex composed of JUN-FOS heterodimers (By similarity). As part of the AP-1 transcription factor complex, forms heterodimers with FOSB, thereby binding to the AP-1 consensus sequence and stimulating transcription (By similarity). Interacts with FOS and FOSB isoform 1 and 2 (By similarity). The ATF7/JUN heterodimer is essential for ATF7 transactivation activity (PubMed:10376527). Interacts with TSC22D3 (via N-terminus); the interaction inhibits the binding of active AP1 to its target DNA (By similarity). Interacts with HIVEP3 and MYBBP1A (By similarity). Interacts with SP1, SPIB and TCF20 (PubMed:10196196, PubMed:16478997, PubMed:8663478). Interacts with COPS5; the interaction leads indirectly to its phosphorylation (PubMed:8837781). Component of the SMAD3/SMAD4/JUN/FOS/complex which forms at the AP1 promoter site (PubMed:10995748). The SMAD3/SMAD4 heterodimer acts synergistically with the JUN/FOS heterodimer to activate transcription in response to TGF-beta (PubMed:9732876). Interacts (via its basic DNA binding and leucine zipper domains) with SMAD3 (via an N-terminal domain); the interaction is required for TGF-beta-mediated transactivation of the SMAD3/SMAD4/JUN/FOS/complex (PubMed:10995748). Interacts with methylated RNF187 (PubMed:20852630, PubMed:23624934). Binds to HIPK3. Interacts (when phosphorylated) with FBXW7 (PubMed:14739463). Found in a complex with PRR7 and FBXW7 (PubMed:27458189). Interacts with PRR7 and FBXW7; the interaction inhibits ubiquitination-mediated JUN degradation promoting its phosphorylation and transcriptional activity (PubMed:27458189). Interacts with RBM39 (By similarity). Interacts with PAGE4 (PubMed:24263171, PubMed:24559171, PubMed:26242913). Interacts with ARK2N and CSNK2B; the interaction with ARK2N is mediated by CSNK2B (PubMed:31341047).</text>
</comment>
<comment type="interaction">
    <interactant intactId="EBI-852823">
        <id>P05412</id>
    </interactant>
    <interactant intactId="EBI-2967304">
        <id>P78563</id>
        <label>ADARB1</label>
    </interactant>
    <organismsDiffer>false</organismsDiffer>
    <experiments>3</experiments>
</comment>
<comment type="interaction">
    <interactant intactId="EBI-852823">
        <id>P05412</id>
    </interactant>
    <interactant intactId="EBI-79306">
        <id>Q06481</id>
        <label>APLP2</label>
    </interactant>
    <organismsDiffer>false</organismsDiffer>
    <experiments>3</experiments>
</comment>
<comment type="interaction">
    <interactant intactId="EBI-852823">
        <id>P05412</id>
    </interactant>
    <interactant intactId="EBI-77613">
        <id>P05067</id>
        <label>APP</label>
    </interactant>
    <organismsDiffer>false</organismsDiffer>
    <experiments>5</experiments>
</comment>
<comment type="interaction">
    <interactant intactId="EBI-852823">
        <id>P05412</id>
    </interactant>
    <interactant intactId="EBI-852794">
        <id>P18846</id>
        <label>ATF1</label>
    </interactant>
    <organismsDiffer>false</organismsDiffer>
    <experiments>2</experiments>
</comment>
<comment type="interaction">
    <interactant intactId="EBI-852823">
        <id>P05412</id>
    </interactant>
    <interactant intactId="EBI-1170906">
        <id>P15336</id>
        <label>ATF2</label>
    </interactant>
    <organismsDiffer>false</organismsDiffer>
    <experiments>22</experiments>
</comment>
<comment type="interaction">
    <interactant intactId="EBI-852823">
        <id>P05412</id>
    </interactant>
    <interactant intactId="EBI-712767">
        <id>P18847</id>
        <label>ATF3</label>
    </interactant>
    <organismsDiffer>false</organismsDiffer>
    <experiments>10</experiments>
</comment>
<comment type="interaction">
    <interactant intactId="EBI-852823">
        <id>P05412</id>
    </interactant>
    <interactant intactId="EBI-492498">
        <id>P18848</id>
        <label>ATF4</label>
    </interactant>
    <organismsDiffer>false</organismsDiffer>
    <experiments>4</experiments>
</comment>
<comment type="interaction">
    <interactant intactId="EBI-852823">
        <id>P05412</id>
    </interactant>
    <interactant intactId="EBI-765623">
        <id>P17544</id>
        <label>ATF7</label>
    </interactant>
    <organismsDiffer>false</organismsDiffer>
    <experiments>7</experiments>
</comment>
<comment type="interaction">
    <interactant intactId="EBI-852823">
        <id>P05412</id>
    </interactant>
    <interactant intactId="EBI-749503">
        <id>Q16520</id>
        <label>BATF</label>
    </interactant>
    <organismsDiffer>false</organismsDiffer>
    <experiments>4</experiments>
</comment>
<comment type="interaction">
    <interactant intactId="EBI-852823">
        <id>P05412</id>
    </interactant>
    <interactant intactId="EBI-742695">
        <id>Q8N1L9</id>
        <label>BATF2</label>
    </interactant>
    <organismsDiffer>false</organismsDiffer>
    <experiments>2</experiments>
</comment>
<comment type="interaction">
    <interactant intactId="EBI-852823">
        <id>P05412</id>
    </interactant>
    <interactant intactId="EBI-15746052">
        <id>Q8N1L9-1</id>
        <label>BATF2</label>
    </interactant>
    <organismsDiffer>false</organismsDiffer>
    <experiments>3</experiments>
</comment>
<comment type="interaction">
    <interactant intactId="EBI-852823">
        <id>P05412</id>
    </interactant>
    <interactant intactId="EBI-10312707">
        <id>Q9NR55</id>
        <label>BATF3</label>
    </interactant>
    <organismsDiffer>false</organismsDiffer>
    <experiments>10</experiments>
</comment>
<comment type="interaction">
    <interactant intactId="EBI-852823">
        <id>P05412</id>
    </interactant>
    <interactant intactId="EBI-1806001">
        <id>Q8IWZ6</id>
        <label>BBS7</label>
    </interactant>
    <organismsDiffer>false</organismsDiffer>
    <experiments>3</experiments>
</comment>
<comment type="interaction">
    <interactant intactId="EBI-852823">
        <id>P05412</id>
    </interactant>
    <interactant intactId="EBI-740209">
        <id>P53567</id>
        <label>CEBPG</label>
    </interactant>
    <organismsDiffer>false</organismsDiffer>
    <experiments>2</experiments>
</comment>
<comment type="interaction">
    <interactant intactId="EBI-852823">
        <id>P05412</id>
    </interactant>
    <interactant intactId="EBI-2624951">
        <id>Q99966</id>
        <label>CITED1</label>
    </interactant>
    <organismsDiffer>false</organismsDiffer>
    <experiments>2</experiments>
</comment>
<comment type="interaction">
    <interactant intactId="EBI-852823">
        <id>P05412</id>
    </interactant>
    <interactant intactId="EBI-713677">
        <id>Q9UGL9</id>
        <label>CRCT1</label>
    </interactant>
    <organismsDiffer>false</organismsDiffer>
    <experiments>3</experiments>
</comment>
<comment type="interaction">
    <interactant intactId="EBI-852823">
        <id>P05412</id>
    </interactant>
    <interactant intactId="EBI-625002">
        <id>O43889</id>
        <label>CREB3</label>
    </interactant>
    <organismsDiffer>false</organismsDiffer>
    <experiments>4</experiments>
</comment>
<comment type="interaction">
    <interactant intactId="EBI-852823">
        <id>P05412</id>
    </interactant>
    <interactant intactId="EBI-711977">
        <id>P20042</id>
        <label>EIF2S2</label>
    </interactant>
    <organismsDiffer>false</organismsDiffer>
    <experiments>4</experiments>
</comment>
<comment type="interaction">
    <interactant intactId="EBI-852823">
        <id>P05412</id>
    </interactant>
    <interactant intactId="EBI-913209">
        <id>P14921</id>
        <label>ETS1</label>
    </interactant>
    <organismsDiffer>false</organismsDiffer>
    <experiments>3</experiments>
</comment>
<comment type="interaction">
    <interactant intactId="EBI-852823">
        <id>P05412</id>
    </interactant>
    <interactant intactId="EBI-348399">
        <id>P22607</id>
        <label>FGFR3</label>
    </interactant>
    <organismsDiffer>false</organismsDiffer>
    <experiments>3</experiments>
</comment>
<comment type="interaction">
    <interactant intactId="EBI-852823">
        <id>P05412</id>
    </interactant>
    <interactant intactId="EBI-852851">
        <id>P01100</id>
        <label>FOS</label>
    </interactant>
    <organismsDiffer>false</organismsDiffer>
    <experiments>43</experiments>
</comment>
<comment type="interaction">
    <interactant intactId="EBI-852823">
        <id>P05412</id>
    </interactant>
    <interactant intactId="EBI-744510">
        <id>P15407</id>
        <label>FOSL1</label>
    </interactant>
    <organismsDiffer>false</organismsDiffer>
    <experiments>12</experiments>
</comment>
<comment type="interaction">
    <interactant intactId="EBI-852823">
        <id>P05412</id>
    </interactant>
    <interactant intactId="EBI-3893419">
        <id>P15408</id>
        <label>FOSL2</label>
    </interactant>
    <organismsDiffer>false</organismsDiffer>
    <experiments>13</experiments>
</comment>
<comment type="interaction">
    <interactant intactId="EBI-852823">
        <id>P05412</id>
    </interactant>
    <interactant intactId="EBI-447141">
        <id>Q9UJY5</id>
        <label>GGA1</label>
    </interactant>
    <organismsDiffer>false</organismsDiffer>
    <experiments>2</experiments>
</comment>
<comment type="interaction">
    <interactant intactId="EBI-852823">
        <id>P05412</id>
    </interactant>
    <interactant intactId="EBI-349832">
        <id>Q9HD26</id>
        <label>GOPC</label>
    </interactant>
    <organismsDiffer>false</organismsDiffer>
    <experiments>3</experiments>
</comment>
<comment type="interaction">
    <interactant intactId="EBI-852823">
        <id>P05412</id>
    </interactant>
    <interactant intactId="EBI-351506">
        <id>P06396</id>
        <label>GSN</label>
    </interactant>
    <organismsDiffer>false</organismsDiffer>
    <experiments>3</experiments>
</comment>
<comment type="interaction">
    <interactant intactId="EBI-852823">
        <id>P05412</id>
    </interactant>
    <interactant intactId="EBI-296047">
        <id>P07900</id>
        <label>HSP90AA1</label>
    </interactant>
    <organismsDiffer>false</organismsDiffer>
    <experiments>4</experiments>
</comment>
<comment type="interaction">
    <interactant intactId="EBI-852823">
        <id>P05412</id>
    </interactant>
    <interactant intactId="EBI-351896">
        <id>P11142</id>
        <label>HSPA8</label>
    </interactant>
    <organismsDiffer>false</organismsDiffer>
    <experiments>3</experiments>
</comment>
<comment type="interaction">
    <interactant intactId="EBI-852823">
        <id>P05412</id>
    </interactant>
    <interactant intactId="EBI-352528">
        <id>P10809</id>
        <label>HSPD1</label>
    </interactant>
    <organismsDiffer>false</organismsDiffer>
    <experiments>5</experiments>
</comment>
<comment type="interaction">
    <interactant intactId="EBI-852823">
        <id>P05412</id>
    </interactant>
    <interactant intactId="EBI-852823">
        <id>P05412</id>
        <label>JUN</label>
    </interactant>
    <organismsDiffer>false</organismsDiffer>
    <experiments>6</experiments>
</comment>
<comment type="interaction">
    <interactant intactId="EBI-852823">
        <id>P05412</id>
    </interactant>
    <interactant intactId="EBI-349938">
        <id>P52292</id>
        <label>KPNA2</label>
    </interactant>
    <organismsDiffer>false</organismsDiffer>
    <experiments>4</experiments>
</comment>
<comment type="interaction">
    <interactant intactId="EBI-852823">
        <id>P05412</id>
    </interactant>
    <interactant intactId="EBI-713543">
        <id>P53779</id>
        <label>MAPK10</label>
    </interactant>
    <organismsDiffer>false</organismsDiffer>
    <experiments>4</experiments>
</comment>
<comment type="interaction">
    <interactant intactId="EBI-852823">
        <id>P05412</id>
    </interactant>
    <interactant intactId="EBI-286483">
        <id>P45983</id>
        <label>MAPK8</label>
    </interactant>
    <organismsDiffer>false</organismsDiffer>
    <experiments>5</experiments>
</comment>
<comment type="interaction">
    <interactant intactId="EBI-852823">
        <id>P05412</id>
    </interactant>
    <interactant intactId="EBI-288687">
        <id>P45983-1</id>
        <label>MAPK8</label>
    </interactant>
    <organismsDiffer>false</organismsDiffer>
    <experiments>2</experiments>
</comment>
<comment type="interaction">
    <interactant intactId="EBI-852823">
        <id>P05412</id>
    </interactant>
    <interactant intactId="EBI-726739">
        <id>Q9UPY8</id>
        <label>MAPRE3</label>
    </interactant>
    <organismsDiffer>false</organismsDiffer>
    <experiments>3</experiments>
</comment>
<comment type="interaction">
    <interactant intactId="EBI-852823">
        <id>P05412</id>
    </interactant>
    <interactant intactId="EBI-389668">
        <id>Q00987</id>
        <label>MDM2</label>
    </interactant>
    <organismsDiffer>false</organismsDiffer>
    <experiments>3</experiments>
</comment>
<comment type="interaction">
    <interactant intactId="EBI-852823">
        <id>P05412</id>
    </interactant>
    <interactant intactId="EBI-714236">
        <id>Q13330</id>
        <label>MTA1</label>
    </interactant>
    <organismsDiffer>false</organismsDiffer>
    <experiments>4</experiments>
</comment>
<comment type="interaction">
    <interactant intactId="EBI-852823">
        <id>P05412</id>
    </interactant>
    <interactant intactId="EBI-10178578">
        <id>I6L9F6</id>
        <label>NEFL</label>
    </interactant>
    <organismsDiffer>false</organismsDiffer>
    <experiments>3</experiments>
</comment>
<comment type="interaction">
    <interactant intactId="EBI-852823">
        <id>P05412</id>
    </interactant>
    <interactant intactId="EBI-1105035">
        <id>P07197</id>
        <label>NEFM</label>
    </interactant>
    <organismsDiffer>false</organismsDiffer>
    <experiments>2</experiments>
</comment>
<comment type="interaction">
    <interactant intactId="EBI-852823">
        <id>P05412</id>
    </interactant>
    <interactant intactId="EBI-6907210">
        <id>O95644</id>
        <label>NFATC1</label>
    </interactant>
    <organismsDiffer>false</organismsDiffer>
    <experiments>5</experiments>
</comment>
<comment type="interaction">
    <interactant intactId="EBI-852823">
        <id>P05412</id>
    </interactant>
    <interactant intactId="EBI-10087113">
        <id>Q13469-2</id>
        <label>NFATC2</label>
    </interactant>
    <organismsDiffer>false</organismsDiffer>
    <experiments>6</experiments>
</comment>
<comment type="interaction">
    <interactant intactId="EBI-852823">
        <id>P05412</id>
    </interactant>
    <interactant intactId="EBI-2007911">
        <id>Q16236</id>
        <label>NFE2L2</label>
    </interactant>
    <organismsDiffer>false</organismsDiffer>
    <experiments>2</experiments>
</comment>
<comment type="interaction">
    <interactant intactId="EBI-852823">
        <id>P05412</id>
    </interactant>
    <interactant intactId="EBI-27085632">
        <id>O60829</id>
        <label>PAGE4</label>
    </interactant>
    <organismsDiffer>false</organismsDiffer>
    <experiments>2</experiments>
</comment>
<comment type="interaction">
    <interactant intactId="EBI-852823">
        <id>P05412</id>
    </interactant>
    <interactant intactId="EBI-9090282">
        <id>P27986-2</id>
        <label>PIK3R1</label>
    </interactant>
    <organismsDiffer>false</organismsDiffer>
    <experiments>3</experiments>
</comment>
<comment type="interaction">
    <interactant intactId="EBI-852823">
        <id>P05412</id>
    </interactant>
    <interactant intactId="EBI-347545">
        <id>P48634</id>
        <label>PRRC2A</label>
    </interactant>
    <organismsDiffer>false</organismsDiffer>
    <experiments>2</experiments>
</comment>
<comment type="interaction">
    <interactant intactId="EBI-852823">
        <id>P05412</id>
    </interactant>
    <interactant intactId="EBI-413628">
        <id>P63000</id>
        <label>RAC1</label>
    </interactant>
    <organismsDiffer>false</organismsDiffer>
    <experiments>5</experiments>
</comment>
<comment type="interaction">
    <interactant intactId="EBI-852823">
        <id>P05412</id>
    </interactant>
    <interactant intactId="EBI-78657">
        <id>Q8WTV0</id>
        <label>SCARB1</label>
    </interactant>
    <organismsDiffer>false</organismsDiffer>
    <experiments>3</experiments>
</comment>
<comment type="interaction">
    <interactant intactId="EBI-852823">
        <id>P05412</id>
    </interactant>
    <interactant intactId="EBI-1040141">
        <id>Q15796</id>
        <label>SMAD2</label>
    </interactant>
    <organismsDiffer>false</organismsDiffer>
    <experiments>3</experiments>
</comment>
<comment type="interaction">
    <interactant intactId="EBI-852823">
        <id>P05412</id>
    </interactant>
    <interactant intactId="EBI-717245">
        <id>Q9NRL3</id>
        <label>STRN4</label>
    </interactant>
    <organismsDiffer>false</organismsDiffer>
    <experiments>3</experiments>
</comment>
<comment type="interaction">
    <interactant intactId="EBI-852823">
        <id>P05412</id>
    </interactant>
    <interactant intactId="EBI-749995">
        <id>P56279</id>
        <label>TCL1A</label>
    </interactant>
    <organismsDiffer>false</organismsDiffer>
    <experiments>6</experiments>
</comment>
<comment type="interaction">
    <interactant intactId="EBI-852823">
        <id>P05412</id>
    </interactant>
    <interactant intactId="EBI-302552">
        <id>Q71U36</id>
        <label>TUBA1A</label>
    </interactant>
    <organismsDiffer>false</organismsDiffer>
    <experiments>3</experiments>
</comment>
<comment type="interaction">
    <interactant intactId="EBI-852823">
        <id>P05412</id>
    </interactant>
    <interactant intactId="EBI-350864">
        <id>P07437</id>
        <label>TUBB</label>
    </interactant>
    <organismsDiffer>false</organismsDiffer>
    <experiments>3</experiments>
</comment>
<comment type="interaction">
    <interactant intactId="EBI-852823">
        <id>P05412</id>
    </interactant>
    <interactant intactId="EBI-711595">
        <id>Q13885</id>
        <label>TUBB2A</label>
    </interactant>
    <organismsDiffer>false</organismsDiffer>
    <experiments>5</experiments>
</comment>
<comment type="interaction">
    <interactant intactId="EBI-852823">
        <id>P05412</id>
    </interactant>
    <interactant intactId="EBI-741480">
        <id>Q9UMX0</id>
        <label>UBQLN1</label>
    </interactant>
    <organismsDiffer>false</organismsDiffer>
    <experiments>3</experiments>
</comment>
<comment type="interaction">
    <interactant intactId="EBI-852823">
        <id>P05412</id>
    </interactant>
    <interactant intactId="EBI-1769146">
        <id>Q99986</id>
        <label>VRK1</label>
    </interactant>
    <organismsDiffer>false</organismsDiffer>
    <experiments>5</experiments>
</comment>
<comment type="interaction">
    <interactant intactId="EBI-852823">
        <id>P05412</id>
    </interactant>
    <interactant intactId="EBI-10890294">
        <id>P0C746</id>
        <label>HBZ</label>
    </interactant>
    <organismsDiffer>true</organismsDiffer>
    <experiments>3</experiments>
</comment>
<comment type="interaction">
    <interactant intactId="EBI-852823">
        <id>P05412</id>
    </interactant>
    <interactant intactId="EBI-321822">
        <id>Q8WQG9</id>
        <label>jnk-1</label>
    </interactant>
    <organismsDiffer>true</organismsDiffer>
    <experiments>3</experiments>
</comment>
<comment type="interaction">
    <interactant intactId="EBI-852823">
        <id>P05412</id>
    </interactant>
    <interactant intactId="EBI-1809712">
        <id>P56671</id>
        <label>Maz</label>
    </interactant>
    <organismsDiffer>true</organismsDiffer>
    <experiments>2</experiments>
</comment>
<comment type="interaction">
    <interactant intactId="EBI-852823">
        <id>P05412</id>
    </interactant>
    <interactant intactId="EBI-10889526">
        <id>Q9DGW5</id>
        <label>MDV005</label>
    </interactant>
    <organismsDiffer>true</organismsDiffer>
    <experiments>3</experiments>
</comment>
<comment type="subcellular location">
    <subcellularLocation>
        <location>Nucleus</location>
    </subcellularLocation>
</comment>
<comment type="tissue specificity">
    <text evidence="22 23">Expressed in the developing and adult prostate and prostate cancer cells.</text>
</comment>
<comment type="PTM">
    <text evidence="10 26">Ubiquitinated by the SCF(FBXW7), leading to its degradation (PubMed:14739463, PubMed:27458189). Ubiquitination takes place following phosphorylation, that promotes interaction with FBXW7 (PubMed:14739463).</text>
</comment>
<comment type="PTM">
    <text evidence="10 13 14 15 16 18 20 28 29 32">Phosphorylated by CaMK4 and PRKDC; phosphorylation enhances the transcriptional activity. Phosphorylated by HIPK3. Phosphorylated by DYRK2 at Ser-243; this primes the protein for subsequent phosphorylation by GSK3B at Thr-239. Phosphorylated at Thr-239, Ser-243 and Ser-249 by GSK3B; phosphorylation reduces its ability to bind DNA. Phosphorylated by PAK2 at Thr-2, Thr-8, Thr-89, Thr-93 and Thr-286 thereby promoting JUN-mediated cell proliferation and transformation. Phosphorylated by PLK3 following hypoxia or UV irradiation, leading to increase DNA-binding activity. Phosphorylated by VRK1 (PubMed:31527692).</text>
</comment>
<comment type="PTM">
    <text evidence="7">Acetylated at Lys-271 by EP300.</text>
</comment>
<comment type="similarity">
    <text evidence="34">Belongs to the bZIP family. Jun subfamily.</text>
</comment>
<comment type="online information" name="Atlas of Genetics and Cytogenetics in Oncology and Haematology">
    <link uri="https://atlasgeneticsoncology.org/gene/151/JUN"/>
</comment>
<reference key="1">
    <citation type="journal article" date="1988" name="Proc. Natl. Acad. Sci. U.S.A.">
        <title>Structure and chromosomal localization of the functional intronless human JUN protooncogene.</title>
        <authorList>
            <person name="Hattori K."/>
            <person name="Angel P."/>
            <person name="le Beau M.M."/>
            <person name="Karin M."/>
        </authorList>
    </citation>
    <scope>NUCLEOTIDE SEQUENCE [GENOMIC DNA]</scope>
</reference>
<reference key="2">
    <citation type="journal article" date="1987" name="Science">
        <title>Human proto-oncogene c-jun encodes a DNA binding protein with structural and functional properties of transcription factor AP-1.</title>
        <authorList>
            <person name="Bohmann D."/>
            <person name="Bos T.J."/>
            <person name="Admon A."/>
            <person name="Nishimura T."/>
            <person name="Vogt P.K."/>
            <person name="Tjian R."/>
        </authorList>
    </citation>
    <scope>NUCLEOTIDE SEQUENCE [MRNA]</scope>
    <scope>PARTIAL PROTEIN SEQUENCE</scope>
</reference>
<reference key="3">
    <citation type="submission" date="2004-06" db="EMBL/GenBank/DDBJ databases">
        <title>Cloning of human full open reading frames in Gateway(TM) system entry vector (pDONR201).</title>
        <authorList>
            <person name="Ebert L."/>
            <person name="Schick M."/>
            <person name="Neubert P."/>
            <person name="Schatten R."/>
            <person name="Henze S."/>
            <person name="Korn B."/>
        </authorList>
    </citation>
    <scope>NUCLEOTIDE SEQUENCE [LARGE SCALE MRNA]</scope>
</reference>
<reference key="4">
    <citation type="submission" date="2004-10" db="EMBL/GenBank/DDBJ databases">
        <title>Cloning of human full-length CDSs in BD Creator(TM) system donor vector.</title>
        <authorList>
            <person name="Kalnine N."/>
            <person name="Chen X."/>
            <person name="Rolfs A."/>
            <person name="Halleck A."/>
            <person name="Hines L."/>
            <person name="Eisenstein S."/>
            <person name="Koundinya M."/>
            <person name="Raphael J."/>
            <person name="Moreira D."/>
            <person name="Kelley T."/>
            <person name="LaBaer J."/>
            <person name="Lin Y."/>
            <person name="Phelan M."/>
            <person name="Farmer A."/>
        </authorList>
    </citation>
    <scope>NUCLEOTIDE SEQUENCE [LARGE SCALE MRNA]</scope>
</reference>
<reference key="5">
    <citation type="submission" date="2003-01" db="EMBL/GenBank/DDBJ databases">
        <authorList>
            <consortium name="NIEHS SNPs program"/>
        </authorList>
    </citation>
    <scope>NUCLEOTIDE SEQUENCE [GENOMIC DNA]</scope>
</reference>
<reference key="6">
    <citation type="journal article" date="2006" name="Nature">
        <title>The DNA sequence and biological annotation of human chromosome 1.</title>
        <authorList>
            <person name="Gregory S.G."/>
            <person name="Barlow K.F."/>
            <person name="McLay K.E."/>
            <person name="Kaul R."/>
            <person name="Swarbreck D."/>
            <person name="Dunham A."/>
            <person name="Scott C.E."/>
            <person name="Howe K.L."/>
            <person name="Woodfine K."/>
            <person name="Spencer C.C.A."/>
            <person name="Jones M.C."/>
            <person name="Gillson C."/>
            <person name="Searle S."/>
            <person name="Zhou Y."/>
            <person name="Kokocinski F."/>
            <person name="McDonald L."/>
            <person name="Evans R."/>
            <person name="Phillips K."/>
            <person name="Atkinson A."/>
            <person name="Cooper R."/>
            <person name="Jones C."/>
            <person name="Hall R.E."/>
            <person name="Andrews T.D."/>
            <person name="Lloyd C."/>
            <person name="Ainscough R."/>
            <person name="Almeida J.P."/>
            <person name="Ambrose K.D."/>
            <person name="Anderson F."/>
            <person name="Andrew R.W."/>
            <person name="Ashwell R.I.S."/>
            <person name="Aubin K."/>
            <person name="Babbage A.K."/>
            <person name="Bagguley C.L."/>
            <person name="Bailey J."/>
            <person name="Beasley H."/>
            <person name="Bethel G."/>
            <person name="Bird C.P."/>
            <person name="Bray-Allen S."/>
            <person name="Brown J.Y."/>
            <person name="Brown A.J."/>
            <person name="Buckley D."/>
            <person name="Burton J."/>
            <person name="Bye J."/>
            <person name="Carder C."/>
            <person name="Chapman J.C."/>
            <person name="Clark S.Y."/>
            <person name="Clarke G."/>
            <person name="Clee C."/>
            <person name="Cobley V."/>
            <person name="Collier R.E."/>
            <person name="Corby N."/>
            <person name="Coville G.J."/>
            <person name="Davies J."/>
            <person name="Deadman R."/>
            <person name="Dunn M."/>
            <person name="Earthrowl M."/>
            <person name="Ellington A.G."/>
            <person name="Errington H."/>
            <person name="Frankish A."/>
            <person name="Frankland J."/>
            <person name="French L."/>
            <person name="Garner P."/>
            <person name="Garnett J."/>
            <person name="Gay L."/>
            <person name="Ghori M.R.J."/>
            <person name="Gibson R."/>
            <person name="Gilby L.M."/>
            <person name="Gillett W."/>
            <person name="Glithero R.J."/>
            <person name="Grafham D.V."/>
            <person name="Griffiths C."/>
            <person name="Griffiths-Jones S."/>
            <person name="Grocock R."/>
            <person name="Hammond S."/>
            <person name="Harrison E.S.I."/>
            <person name="Hart E."/>
            <person name="Haugen E."/>
            <person name="Heath P.D."/>
            <person name="Holmes S."/>
            <person name="Holt K."/>
            <person name="Howden P.J."/>
            <person name="Hunt A.R."/>
            <person name="Hunt S.E."/>
            <person name="Hunter G."/>
            <person name="Isherwood J."/>
            <person name="James R."/>
            <person name="Johnson C."/>
            <person name="Johnson D."/>
            <person name="Joy A."/>
            <person name="Kay M."/>
            <person name="Kershaw J.K."/>
            <person name="Kibukawa M."/>
            <person name="Kimberley A.M."/>
            <person name="King A."/>
            <person name="Knights A.J."/>
            <person name="Lad H."/>
            <person name="Laird G."/>
            <person name="Lawlor S."/>
            <person name="Leongamornlert D.A."/>
            <person name="Lloyd D.M."/>
            <person name="Loveland J."/>
            <person name="Lovell J."/>
            <person name="Lush M.J."/>
            <person name="Lyne R."/>
            <person name="Martin S."/>
            <person name="Mashreghi-Mohammadi M."/>
            <person name="Matthews L."/>
            <person name="Matthews N.S.W."/>
            <person name="McLaren S."/>
            <person name="Milne S."/>
            <person name="Mistry S."/>
            <person name="Moore M.J.F."/>
            <person name="Nickerson T."/>
            <person name="O'Dell C.N."/>
            <person name="Oliver K."/>
            <person name="Palmeiri A."/>
            <person name="Palmer S.A."/>
            <person name="Parker A."/>
            <person name="Patel D."/>
            <person name="Pearce A.V."/>
            <person name="Peck A.I."/>
            <person name="Pelan S."/>
            <person name="Phelps K."/>
            <person name="Phillimore B.J."/>
            <person name="Plumb R."/>
            <person name="Rajan J."/>
            <person name="Raymond C."/>
            <person name="Rouse G."/>
            <person name="Saenphimmachak C."/>
            <person name="Sehra H.K."/>
            <person name="Sheridan E."/>
            <person name="Shownkeen R."/>
            <person name="Sims S."/>
            <person name="Skuce C.D."/>
            <person name="Smith M."/>
            <person name="Steward C."/>
            <person name="Subramanian S."/>
            <person name="Sycamore N."/>
            <person name="Tracey A."/>
            <person name="Tromans A."/>
            <person name="Van Helmond Z."/>
            <person name="Wall M."/>
            <person name="Wallis J.M."/>
            <person name="White S."/>
            <person name="Whitehead S.L."/>
            <person name="Wilkinson J.E."/>
            <person name="Willey D.L."/>
            <person name="Williams H."/>
            <person name="Wilming L."/>
            <person name="Wray P.W."/>
            <person name="Wu Z."/>
            <person name="Coulson A."/>
            <person name="Vaudin M."/>
            <person name="Sulston J.E."/>
            <person name="Durbin R.M."/>
            <person name="Hubbard T."/>
            <person name="Wooster R."/>
            <person name="Dunham I."/>
            <person name="Carter N.P."/>
            <person name="McVean G."/>
            <person name="Ross M.T."/>
            <person name="Harrow J."/>
            <person name="Olson M.V."/>
            <person name="Beck S."/>
            <person name="Rogers J."/>
            <person name="Bentley D.R."/>
        </authorList>
    </citation>
    <scope>NUCLEOTIDE SEQUENCE [LARGE SCALE GENOMIC DNA]</scope>
</reference>
<reference key="7">
    <citation type="journal article" date="2004" name="Genome Res.">
        <title>The status, quality, and expansion of the NIH full-length cDNA project: the Mammalian Gene Collection (MGC).</title>
        <authorList>
            <consortium name="The MGC Project Team"/>
        </authorList>
    </citation>
    <scope>NUCLEOTIDE SEQUENCE [LARGE SCALE MRNA]</scope>
    <source>
        <tissue>B-cell</tissue>
        <tissue>Ovary</tissue>
        <tissue>Testis</tissue>
        <tissue>Uterus</tissue>
    </source>
</reference>
<reference key="8">
    <citation type="journal article" date="1991" name="Cell">
        <title>Activation of protein kinase C decreases phosphorylation of c-Jun at sites that negatively regulate its DNA-binding activity.</title>
        <authorList>
            <person name="Boyle W.J."/>
            <person name="Smeal T."/>
            <person name="Defize L.H."/>
            <person name="Angel P."/>
            <person name="Woodgett J.R."/>
            <person name="Karin M."/>
            <person name="Hunter T."/>
        </authorList>
    </citation>
    <scope>PHOSPHORYLATION AT THR-239; SER-243 AND SER-249 BY GSK3B</scope>
</reference>
<reference key="9">
    <citation type="journal article" date="1993" name="Nucleic Acids Res.">
        <title>c-Jun is phosphorylated by the DNA-dependent protein kinase in vitro; definition of the minimal kinase recognition motif.</title>
        <authorList>
            <person name="Bannister A.J."/>
            <person name="Gottlieb T.M."/>
            <person name="Kouzarides T."/>
            <person name="Jackson S.P."/>
        </authorList>
    </citation>
    <scope>PHOSPHORYLATION AT SER-249</scope>
</reference>
<reference key="10">
    <citation type="journal article" date="1996" name="Proc. Natl. Acad. Sci. U.S.A.">
        <title>Regulation of mitogen-activated protein kinases by a calcium/calmodulin-dependent protein kinase cascade.</title>
        <authorList>
            <person name="Enslen H."/>
            <person name="Tokumitsu H."/>
            <person name="Stork P.J."/>
            <person name="Davis R.J."/>
            <person name="Soderling T.R."/>
        </authorList>
    </citation>
    <scope>PHOSPHORYLATION BY CAMK4</scope>
</reference>
<reference key="11">
    <citation type="journal article" date="1996" name="J. Biol. Chem.">
        <title>Cross-talk between different enhancer elements during mitogenic induction of the human stromelysin-1 gene.</title>
        <authorList>
            <person name="Kirstein M."/>
            <person name="Sanz L."/>
            <person name="Moscat J."/>
            <person name="Diaz-Meco M.T."/>
            <person name="Saus J."/>
        </authorList>
    </citation>
    <scope>INTERACTION WITH TCF20</scope>
</reference>
<reference key="12">
    <citation type="journal article" date="1996" name="Nature">
        <title>A new group of conserved coactivators that increase the specificity of AP-1 transcription factors.</title>
        <authorList>
            <person name="Claret F.-X."/>
            <person name="Hibi M."/>
            <person name="Dhut S."/>
            <person name="Toda T."/>
            <person name="Karin M."/>
        </authorList>
    </citation>
    <scope>INTERACTION WITH COPS5</scope>
</reference>
<reference key="13">
    <citation type="journal article" date="1998" name="Nature">
        <title>Smad3 and Smad4 cooperate with c-Jun/c-Fos to mediate TGF-beta-induced transcription.</title>
        <authorList>
            <person name="Zhang Y."/>
            <person name="Feng X.H."/>
            <person name="Derynck R."/>
        </authorList>
    </citation>
    <scope>IDENTIFICATION AS A COMPONENT OF THE SMAD3/SMAD4/JUN/FOS COMPLEX</scope>
    <scope>INTERACTION WITH SMAD3</scope>
</reference>
<reference key="14">
    <citation type="journal article" date="1999" name="J. Biol. Chem.">
        <title>SPI-B activates transcription via a unique proline, serine, and threonine domain and exhibits DNA binding affinity differences from PU.1.</title>
        <authorList>
            <person name="Rao S."/>
            <person name="Matsumura A."/>
            <person name="Yoon J."/>
            <person name="Simon M.C."/>
        </authorList>
    </citation>
    <scope>INTERACTION WITH SPIB</scope>
</reference>
<reference key="15">
    <citation type="journal article" date="1999" name="Oncogene">
        <title>Role of the ATFa/JNK2 complex in Jun activation.</title>
        <authorList>
            <person name="De Graeve F."/>
            <person name="Bahr A."/>
            <person name="Sabapathy K.T."/>
            <person name="Hauss C."/>
            <person name="Wagner E.F."/>
            <person name="Kedinger C."/>
            <person name="Chatton B."/>
        </authorList>
    </citation>
    <scope>INTERACTION WITH ATF7</scope>
    <scope>MUTAGENESIS OF SER-63 AND SER-73</scope>
</reference>
<reference key="16">
    <citation type="journal article" date="2000" name="J. Biol. Chem.">
        <title>Structural and functional characterization of the transforming growth factor-beta -induced Smad3/c-Jun transcriptional cooperativity.</title>
        <authorList>
            <person name="Qing J."/>
            <person name="Zhang Y."/>
            <person name="Derynck R."/>
        </authorList>
    </citation>
    <scope>INTERACTION WITH SMAD3 IN THE SMAD3/SMAD4/JUN/FOS COMPLEX</scope>
    <scope>DNA-BINDING</scope>
    <scope>FUNCTION</scope>
    <scope>MUTAGENESIS OF ARG-272</scope>
</reference>
<reference key="17">
    <citation type="journal article" date="2001" name="EMBO J.">
        <title>A specific lysine in c-Jun is required for transcriptional repression by E1A and is acetylated by p300.</title>
        <authorList>
            <person name="Vries R.G."/>
            <person name="Prudenziati M."/>
            <person name="Zwartjes C."/>
            <person name="Verlaan M."/>
            <person name="Kalkhoven E."/>
            <person name="Zantema A."/>
        </authorList>
    </citation>
    <scope>ACETYLATION AT LYS-271 BY EP300</scope>
</reference>
<reference key="18">
    <citation type="journal article" date="2002" name="J. Biol. Chem.">
        <title>Correlation of transcriptional repression by p21(SNFT) with changes in DNA.NF-AT complex interactions.</title>
        <authorList>
            <person name="Bower K.E."/>
            <person name="Zeller R.W."/>
            <person name="Wachsman W."/>
            <person name="Martinez T."/>
            <person name="McGuire K.L."/>
        </authorList>
    </citation>
    <scope>INTERACTION WITH BATF3</scope>
</reference>
<reference key="19">
    <citation type="journal article" date="2003" name="Oncogene">
        <title>An unexpected role for FosB in activation-induced cell death of T cells.</title>
        <authorList>
            <person name="Baumann S."/>
            <person name="Hess J."/>
            <person name="Eichhorst S.T."/>
            <person name="Krueger A."/>
            <person name="Angel P."/>
            <person name="Krammer P.H."/>
            <person name="Kirchhoff S."/>
        </authorList>
    </citation>
    <scope>FUNCTION</scope>
    <scope>MUTAGENESIS OF 6-GLU--GLY-194</scope>
</reference>
<reference key="20">
    <citation type="journal article" date="2004" name="Oncogene">
        <title>Transcriptional repression of MMP-1 by p21SNFT and reduced in vitro invasiveness of hepatocarcinoma cells.</title>
        <authorList>
            <person name="Bower K.E."/>
            <person name="Fritz J.M."/>
            <person name="McGuire K.L."/>
        </authorList>
    </citation>
    <scope>INTERACTION WITH BATF3</scope>
</reference>
<reference key="21">
    <citation type="journal article" date="2004" name="Science">
        <title>The ubiquitin ligase SCFFbw7 antagonizes apoptotic JNK signaling.</title>
        <authorList>
            <person name="Nateri A.S."/>
            <person name="Riera-Sans L."/>
            <person name="Da Costa C."/>
            <person name="Behrens A."/>
        </authorList>
    </citation>
    <scope>PHOSPHORYLATION AT SER-63; SER-73; THR-91 AND THR-93</scope>
    <scope>UBIQUITINATION</scope>
    <scope>INTERACTION WITH FBXW7</scope>
    <scope>MUTAGENESIS OF SER-63; SER-73; THR-91 AND THR-93</scope>
</reference>
<reference key="22">
    <citation type="journal article" date="2007" name="Mol. Cell. Biol.">
        <title>Cyclic AMP stimulates SF-1-dependent CYP11A1 expression through homeodomain-interacting protein kinase 3-mediated Jun N-terminal kinase and c-Jun phosphorylation.</title>
        <authorList>
            <person name="Lan H.-C."/>
            <person name="Li H.-J."/>
            <person name="Lin G."/>
            <person name="Lai P.-Y."/>
            <person name="Chung B.-C."/>
        </authorList>
    </citation>
    <scope>FUNCTION</scope>
    <scope>PHOSPHORYLATION BY HIPK3</scope>
</reference>
<reference key="23">
    <citation type="journal article" date="2006" name="Mol. Cell. Biol.">
        <title>Sp1 deacetylation induced by phorbol ester recruits p300 to activate 12(S)-lipoxygenase gene transcription.</title>
        <authorList>
            <person name="Hung J.J."/>
            <person name="Wang Y.T."/>
            <person name="Chang W.C."/>
        </authorList>
    </citation>
    <scope>INTERACTION WITH SP1</scope>
</reference>
<reference key="24">
    <citation type="journal article" date="2007" name="J. Biol. Chem.">
        <title>Stress-induced c-Jun activation mediated by Polo-like kinase 3 in corneal epithelial cells.</title>
        <authorList>
            <person name="Wang L."/>
            <person name="Dai W."/>
            <person name="Lu L."/>
        </authorList>
    </citation>
    <scope>PHOSPHORYLATION AT SER-63 AND SER-73</scope>
</reference>
<reference key="25">
    <citation type="journal article" date="2008" name="J. Biol. Chem.">
        <title>Activation of Polo-like kinase 3 by hypoxic stresses.</title>
        <authorList>
            <person name="Wang L."/>
            <person name="Gao J."/>
            <person name="Dai W."/>
            <person name="Lu L."/>
        </authorList>
    </citation>
    <scope>PHOSPHORYLATION AT SER-63 AND SER-73</scope>
</reference>
<reference key="26">
    <citation type="journal article" date="2008" name="Proc. Natl. Acad. Sci. U.S.A.">
        <title>A quantitative atlas of mitotic phosphorylation.</title>
        <authorList>
            <person name="Dephoure N."/>
            <person name="Zhou C."/>
            <person name="Villen J."/>
            <person name="Beausoleil S.A."/>
            <person name="Bakalarski C.E."/>
            <person name="Elledge S.J."/>
            <person name="Gygi S.P."/>
        </authorList>
    </citation>
    <scope>PHOSPHORYLATION [LARGE SCALE ANALYSIS] AT SER-58; SER-63; THR-239 AND SER-243</scope>
    <scope>IDENTIFICATION BY MASS SPECTROMETRY [LARGE SCALE ANALYSIS]</scope>
    <source>
        <tissue>Cervix carcinoma</tissue>
    </source>
</reference>
<reference key="27">
    <citation type="journal article" date="2009" name="Anal. Chem.">
        <title>Lys-N and trypsin cover complementary parts of the phosphoproteome in a refined SCX-based approach.</title>
        <authorList>
            <person name="Gauci S."/>
            <person name="Helbig A.O."/>
            <person name="Slijper M."/>
            <person name="Krijgsveld J."/>
            <person name="Heck A.J."/>
            <person name="Mohammed S."/>
        </authorList>
    </citation>
    <scope>IDENTIFICATION BY MASS SPECTROMETRY [LARGE SCALE ANALYSIS]</scope>
</reference>
<reference key="28">
    <citation type="journal article" date="2009" name="Sci. Signal.">
        <title>Quantitative phosphoproteomic analysis of T cell receptor signaling reveals system-wide modulation of protein-protein interactions.</title>
        <authorList>
            <person name="Mayya V."/>
            <person name="Lundgren D.H."/>
            <person name="Hwang S.-I."/>
            <person name="Rezaul K."/>
            <person name="Wu L."/>
            <person name="Eng J.K."/>
            <person name="Rodionov V."/>
            <person name="Han D.K."/>
        </authorList>
    </citation>
    <scope>PHOSPHORYLATION [LARGE SCALE ANALYSIS] AT SER-63 AND SER-243</scope>
    <scope>IDENTIFICATION BY MASS SPECTROMETRY [LARGE SCALE ANALYSIS]</scope>
    <source>
        <tissue>Leukemic T-cell</tissue>
    </source>
</reference>
<reference key="29">
    <citation type="journal article" date="2012" name="Mol. Cell. Biol.">
        <title>The forkhead transcription factor FOXK2 promotes AP-1-mediated transcriptional regulation.</title>
        <authorList>
            <person name="Ji Z."/>
            <person name="Donaldson I.J."/>
            <person name="Liu J."/>
            <person name="Hayes A."/>
            <person name="Zeef L.A."/>
            <person name="Sharrocks A.D."/>
        </authorList>
    </citation>
    <scope>FUNCTION</scope>
    <scope>DNA-BINDING</scope>
</reference>
<reference key="30">
    <citation type="journal article" date="2010" name="Nat. Cell Biol.">
        <title>Identification of a co-activator that links growth factor signalling to c-Jun/AP-1 activation.</title>
        <authorList>
            <person name="Davies C.C."/>
            <person name="Chakraborty A."/>
            <person name="Cipriani F."/>
            <person name="Haigh K."/>
            <person name="Haigh J.J."/>
            <person name="Behrens A."/>
        </authorList>
    </citation>
    <scope>INTERACTION WITH RNF187</scope>
</reference>
<reference key="31">
    <citation type="journal article" date="2010" name="Sci. Signal.">
        <title>Quantitative phosphoproteomics reveals widespread full phosphorylation site occupancy during mitosis.</title>
        <authorList>
            <person name="Olsen J.V."/>
            <person name="Vermeulen M."/>
            <person name="Santamaria A."/>
            <person name="Kumar C."/>
            <person name="Miller M.L."/>
            <person name="Jensen L.J."/>
            <person name="Gnad F."/>
            <person name="Cox J."/>
            <person name="Jensen T.S."/>
            <person name="Nigg E.A."/>
            <person name="Brunak S."/>
            <person name="Mann M."/>
        </authorList>
    </citation>
    <scope>PHOSPHORYLATION [LARGE SCALE ANALYSIS] AT SER-63</scope>
    <scope>IDENTIFICATION BY MASS SPECTROMETRY [LARGE SCALE ANALYSIS]</scope>
    <source>
        <tissue>Cervix carcinoma</tissue>
    </source>
</reference>
<reference key="32">
    <citation type="journal article" date="2011" name="Carcinogenesis">
        <title>P21-activated protein kinase (PAK2)-mediated c-Jun phosphorylation at 5 threonine sites promotes cell transformation.</title>
        <authorList>
            <person name="Li T."/>
            <person name="Zhang J."/>
            <person name="Zhu F."/>
            <person name="Wen W."/>
            <person name="Zykova T."/>
            <person name="Li X."/>
            <person name="Liu K."/>
            <person name="Peng C."/>
            <person name="Ma W."/>
            <person name="Shi G."/>
            <person name="Dong Z."/>
            <person name="Bode A.M."/>
            <person name="Dong Z."/>
        </authorList>
    </citation>
    <scope>PHOSPHORYLATION AT THR-2; THR-8; THR-89; THR-93 AND THR-286</scope>
    <scope>MUTAGENESIS OF THR-2; THR-8; THR-89; THR-93 AND THR-286</scope>
</reference>
<reference key="33">
    <citation type="journal article" date="2011" name="Sci. Signal.">
        <title>System-wide temporal characterization of the proteome and phosphoproteome of human embryonic stem cell differentiation.</title>
        <authorList>
            <person name="Rigbolt K.T."/>
            <person name="Prokhorova T.A."/>
            <person name="Akimov V."/>
            <person name="Henningsen J."/>
            <person name="Johansen P.T."/>
            <person name="Kratchmarova I."/>
            <person name="Kassem M."/>
            <person name="Mann M."/>
            <person name="Olsen J.V."/>
            <person name="Blagoev B."/>
        </authorList>
    </citation>
    <scope>PHOSPHORYLATION [LARGE SCALE ANALYSIS] AT SER-58 AND SER-63</scope>
    <scope>IDENTIFICATION BY MASS SPECTROMETRY [LARGE SCALE ANALYSIS]</scope>
</reference>
<reference key="34">
    <citation type="journal article" date="2012" name="J. Clin. Invest.">
        <title>DYRK2 priming phosphorylation of c-Jun and c-Myc modulates cell cycle progression in human cancer cells.</title>
        <authorList>
            <person name="Taira N."/>
            <person name="Mimoto R."/>
            <person name="Kurata M."/>
            <person name="Yamaguchi T."/>
            <person name="Kitagawa M."/>
            <person name="Miki Y."/>
            <person name="Yoshida K."/>
        </authorList>
    </citation>
    <scope>PHOSPHORYLATION AT SER-243</scope>
    <scope>MUTAGENESIS OF SER-243</scope>
</reference>
<reference key="35">
    <citation type="journal article" date="2013" name="EMBO J.">
        <title>Arginine methylation of the c-Jun coactivator RACO-1 is required for c-Jun/AP-1 activation.</title>
        <authorList>
            <person name="Davies C.C."/>
            <person name="Chakraborty A."/>
            <person name="Diefenbacher M.E."/>
            <person name="Skehel M."/>
            <person name="Behrens A."/>
        </authorList>
    </citation>
    <scope>INTERACTION WITH RNF187</scope>
</reference>
<reference key="36">
    <citation type="journal article" date="2013" name="J. Proteome Res.">
        <title>Toward a comprehensive characterization of a human cancer cell phosphoproteome.</title>
        <authorList>
            <person name="Zhou H."/>
            <person name="Di Palma S."/>
            <person name="Preisinger C."/>
            <person name="Peng M."/>
            <person name="Polat A.N."/>
            <person name="Heck A.J."/>
            <person name="Mohammed S."/>
        </authorList>
    </citation>
    <scope>PHOSPHORYLATION [LARGE SCALE ANALYSIS] AT SER-63 AND SER-243</scope>
    <scope>IDENTIFICATION BY MASS SPECTROMETRY [LARGE SCALE ANALYSIS]</scope>
    <source>
        <tissue>Cervix carcinoma</tissue>
        <tissue>Erythroleukemia</tissue>
    </source>
</reference>
<reference key="37">
    <citation type="journal article" date="2014" name="Biochemistry">
        <title>Cancer/testis antigen PAGE4, a regulator of c-Jun transactivation, is phosphorylated by homeodomain-interacting protein kinase 1, a component of the stress-response pathway.</title>
        <authorList>
            <person name="Mooney S.M."/>
            <person name="Qiu R."/>
            <person name="Kim J.J."/>
            <person name="Sacho E.J."/>
            <person name="Rajagopalan K."/>
            <person name="Johng D."/>
            <person name="Shiraishi T."/>
            <person name="Kulkarni P."/>
            <person name="Weninger K.R."/>
        </authorList>
    </citation>
    <scope>INTERACTION WITH PAGE4</scope>
    <scope>TISSUE SPECIFICITY</scope>
</reference>
<reference key="38">
    <citation type="journal article" date="2014" name="Biochim. Biophys. Acta">
        <title>The Stress-response protein prostate-associated gene 4, interacts with c-Jun and potentiates its transactivation.</title>
        <authorList>
            <person name="Rajagopalan K."/>
            <person name="Qiu R."/>
            <person name="Mooney S.M."/>
            <person name="Rao S."/>
            <person name="Shiraishi T."/>
            <person name="Sacho E."/>
            <person name="Huang H."/>
            <person name="Shapiro E."/>
            <person name="Weninger K.R."/>
            <person name="Kulkarni P."/>
        </authorList>
    </citation>
    <scope>INTERACTION WITH PAGE4</scope>
    <scope>TISSUE SPECIFICITY</scope>
</reference>
<reference key="39">
    <citation type="journal article" date="2014" name="Elife">
        <title>A KRAS-directed transcriptional silencing pathway that mediates the CpG island methylator phenotype.</title>
        <authorList>
            <person name="Serra R.W."/>
            <person name="Fang M."/>
            <person name="Park S.M."/>
            <person name="Hutchinson L."/>
            <person name="Green M.R."/>
        </authorList>
    </citation>
    <scope>FUNCTION</scope>
    <scope>DNA-BINDING</scope>
</reference>
<reference key="40">
    <citation type="journal article" date="2015" name="J. Biol. Chem.">
        <title>Phosphorylation-induced conformational ensemble switching in an intrinsically disordered cancer/testis antigen.</title>
        <authorList>
            <person name="He Y."/>
            <person name="Chen Y."/>
            <person name="Mooney S.M."/>
            <person name="Rajagopalan K."/>
            <person name="Bhargava A."/>
            <person name="Sacho E."/>
            <person name="Weninger K."/>
            <person name="Bryan P.N."/>
            <person name="Kulkarni P."/>
            <person name="Orban J."/>
        </authorList>
    </citation>
    <scope>INTERACTION WITH PAGE4</scope>
</reference>
<reference key="41">
    <citation type="journal article" date="2016" name="EMBO J.">
        <title>Synaptonuclear messenger PRR7 inhibits c-Jun ubiquitination and regulates NMDA-mediated excitotoxicity.</title>
        <authorList>
            <person name="Kravchick D.O."/>
            <person name="Karpova A."/>
            <person name="Hrdinka M."/>
            <person name="Lopez-Rojas J."/>
            <person name="Iacobas S."/>
            <person name="Carbonell A.U."/>
            <person name="Iacobas D.A."/>
            <person name="Kreutz M.R."/>
            <person name="Jordan B.A."/>
        </authorList>
    </citation>
    <scope>IDENTIFICATION IN COMPLEX WITH PRR7 AND FBXW7</scope>
    <scope>INTERACTION WITH PRR7 AND FBXW7</scope>
    <scope>UBIQUITINATION</scope>
</reference>
<reference key="42">
    <citation type="journal article" date="2017" name="Nat. Struct. Mol. Biol.">
        <title>Site-specific mapping of the human SUMO proteome reveals co-modification with phosphorylation.</title>
        <authorList>
            <person name="Hendriks I.A."/>
            <person name="Lyon D."/>
            <person name="Young C."/>
            <person name="Jensen L.J."/>
            <person name="Vertegaal A.C."/>
            <person name="Nielsen M.L."/>
        </authorList>
    </citation>
    <scope>SUMOYLATION [LARGE SCALE ANALYSIS] AT LYS-35; LYS-50; LYS-56; LYS-70 AND LYS-226</scope>
    <scope>IDENTIFICATION BY MASS SPECTROMETRY [LARGE SCALE ANALYSIS]</scope>
</reference>
<reference key="43">
    <citation type="journal article" date="2019" name="J. Virol.">
        <title>Identification of ARKL1 as a Negative Regulator of Epstein-Barr Virus Reactivation.</title>
        <authorList>
            <person name="Siddiqi U.Z."/>
            <person name="Vaidya A.S."/>
            <person name="Li X."/>
            <person name="Marcon E."/>
            <person name="Tsao S.W."/>
            <person name="Greenblatt J."/>
            <person name="Frappier L."/>
        </authorList>
    </citation>
    <scope>FUNCTION (MICROBIAL INFECTION)</scope>
    <scope>INTERACTION WITH ARK2C AND CSNK2B</scope>
</reference>
<reference key="44">
    <citation type="journal article" date="2019" name="Sci. Rep.">
        <title>VRK1 functional insufficiency due to alterations in protein stability or kinase activity of human VRK1 pathogenic variants implicated in neuromotor syndromes.</title>
        <authorList>
            <person name="Martin-Doncel E."/>
            <person name="Rojas A.M."/>
            <person name="Cantarero L."/>
            <person name="Lazo P.A."/>
        </authorList>
    </citation>
    <scope>PHOSPHORYLATION BY VRK1</scope>
</reference>
<reference key="45">
    <citation type="journal article" date="1995" name="Nature">
        <title>Crystal structure of the heterodimeric bZIP transcription factor c-Fos-c-Jun bound to DNA.</title>
        <authorList>
            <person name="Glover J.N."/>
            <person name="Harrison S.C."/>
        </authorList>
    </citation>
    <scope>X-RAY CRYSTALLOGRAPHY (3.05 ANGSTROMS) OF 257-313 OF COMPLEX WITH FOS</scope>
</reference>
<reference key="46">
    <citation type="journal article" date="1996" name="J. Biol. Chem.">
        <title>High resolution NMR solution structure of the leucine zipper domain of the c-Jun homodimer.</title>
        <authorList>
            <person name="Junius F.K."/>
            <person name="O'Donoghue S.I."/>
            <person name="Nilges M."/>
            <person name="Weiss A.S."/>
            <person name="King G.F."/>
        </authorList>
    </citation>
    <scope>STRUCTURE BY NMR OF 276-314</scope>
</reference>
<proteinExistence type="evidence at protein level"/>
<accession>P05412</accession>
<accession>Q6FHM7</accession>
<accession>Q96G93</accession>
<keyword id="KW-0002">3D-structure</keyword>
<keyword id="KW-0007">Acetylation</keyword>
<keyword id="KW-0010">Activator</keyword>
<keyword id="KW-0903">Direct protein sequencing</keyword>
<keyword id="KW-0238">DNA-binding</keyword>
<keyword id="KW-1017">Isopeptide bond</keyword>
<keyword id="KW-0539">Nucleus</keyword>
<keyword id="KW-0597">Phosphoprotein</keyword>
<keyword id="KW-1267">Proteomics identification</keyword>
<keyword id="KW-0656">Proto-oncogene</keyword>
<keyword id="KW-1185">Reference proteome</keyword>
<keyword id="KW-0804">Transcription</keyword>
<keyword id="KW-0805">Transcription regulation</keyword>
<keyword id="KW-0832">Ubl conjugation</keyword>
<feature type="chain" id="PRO_0000076429" description="Transcription factor Jun">
    <location>
        <begin position="1"/>
        <end position="331"/>
    </location>
</feature>
<feature type="domain" description="bZIP" evidence="3">
    <location>
        <begin position="252"/>
        <end position="315"/>
    </location>
</feature>
<feature type="region of interest" description="Interaction with PAGE4" evidence="25">
    <location>
        <begin position="150"/>
        <end position="223"/>
    </location>
</feature>
<feature type="region of interest" description="Basic motif" evidence="3">
    <location>
        <begin position="252"/>
        <end position="279"/>
    </location>
</feature>
<feature type="region of interest" description="Leucine-zipper" evidence="3">
    <location>
        <begin position="280"/>
        <end position="308"/>
    </location>
</feature>
<feature type="site" description="Necessary for synergistic transcriptional activity with SMAD3">
    <location>
        <position position="272"/>
    </location>
</feature>
<feature type="modified residue" description="Phosphothreonine; by PAK2" evidence="18">
    <location>
        <position position="2"/>
    </location>
</feature>
<feature type="modified residue" description="Phosphothreonine; by PAK2" evidence="18">
    <location>
        <position position="8"/>
    </location>
</feature>
<feature type="modified residue" description="N6-acetyllysine; alternate" evidence="1">
    <location>
        <position position="56"/>
    </location>
</feature>
<feature type="modified residue" description="Phosphoserine" evidence="35 38">
    <location>
        <position position="58"/>
    </location>
</feature>
<feature type="modified residue" description="Phosphoserine; by MAPK8 and PLK3" evidence="10 14 16 35 36 37 38 39">
    <location>
        <position position="63"/>
    </location>
</feature>
<feature type="modified residue" description="Phosphoserine; by MAPK8 and PLK3" evidence="10 14 16">
    <location>
        <position position="73"/>
    </location>
</feature>
<feature type="modified residue" description="Phosphothreonine; by PAK2" evidence="18">
    <location>
        <position position="89"/>
    </location>
</feature>
<feature type="modified residue" description="Phosphothreonine" evidence="10">
    <location>
        <position position="91"/>
    </location>
</feature>
<feature type="modified residue" description="Phosphothreonine; by PAK2" evidence="10 18">
    <location>
        <position position="93"/>
    </location>
</feature>
<feature type="modified residue" description="Phosphothreonine; by GSK3-beta" evidence="15 35">
    <location>
        <position position="239"/>
    </location>
</feature>
<feature type="modified residue" description="Phosphoserine; by DYRK2 and GSK3-beta" evidence="15 20 35 36 39">
    <location>
        <position position="243"/>
    </location>
</feature>
<feature type="modified residue" description="Phosphoserine; by GSK3-beta" evidence="15 29">
    <location>
        <position position="249"/>
    </location>
</feature>
<feature type="modified residue" description="N6-acetyllysine" evidence="7">
    <location>
        <position position="271"/>
    </location>
</feature>
<feature type="modified residue" description="Phosphothreonine; by PAK2" evidence="18">
    <location>
        <position position="286"/>
    </location>
</feature>
<feature type="cross-link" description="Glycyl lysine isopeptide (Lys-Gly) (interchain with G-Cter in SUMO2)" evidence="40">
    <location>
        <position position="35"/>
    </location>
</feature>
<feature type="cross-link" description="Glycyl lysine isopeptide (Lys-Gly) (interchain with G-Cter in SUMO2)" evidence="40">
    <location>
        <position position="50"/>
    </location>
</feature>
<feature type="cross-link" description="Glycyl lysine isopeptide (Lys-Gly) (interchain with G-Cter in SUMO2); alternate" evidence="40">
    <location>
        <position position="56"/>
    </location>
</feature>
<feature type="cross-link" description="Glycyl lysine isopeptide (Lys-Gly) (interchain with G-Cter in SUMO2)" evidence="40">
    <location>
        <position position="70"/>
    </location>
</feature>
<feature type="cross-link" description="Glycyl lysine isopeptide (Lys-Gly) (interchain with G-Cter in SUMO2)" evidence="40">
    <location>
        <position position="226"/>
    </location>
</feature>
<feature type="sequence variant" id="VAR_012070" description="In dbSNP:rs9989.">
    <original>T</original>
    <variation>M</variation>
    <location>
        <position position="297"/>
    </location>
</feature>
<feature type="mutagenesis site" description="Complete loss of PAK2-mediated phosphorylation; when associated with A-8; A-89; A-93; and A-286." evidence="18">
    <original>T</original>
    <variation>A</variation>
    <location>
        <position position="2"/>
    </location>
</feature>
<feature type="mutagenesis site" description="Abolishes activation of FASLG/CD95L transcription." evidence="9">
    <location>
        <begin position="6"/>
        <end position="194"/>
    </location>
</feature>
<feature type="mutagenesis site" description="Complete loss of PAK2-mediated phosphorylation; when associated with A-2; A-89; A-93; and A-286." evidence="18">
    <original>T</original>
    <variation>A</variation>
    <location>
        <position position="8"/>
    </location>
</feature>
<feature type="mutagenesis site" description="Greatly reduced ATF7-mediated transcriptional activity; when associated with A-73. Abolishes interaction with FBXW7; when associated with A-73; A-91 and A-93." evidence="5 10">
    <original>S</original>
    <variation>A</variation>
    <location>
        <position position="63"/>
    </location>
</feature>
<feature type="mutagenesis site" description="Greatly reduced ATF7-mediated transcriptional activity; when associated with A-63. Abolishes interaction with FBXW7; when associated with A-63; A-91 and A-93." evidence="5 10">
    <original>S</original>
    <variation>A</variation>
    <location>
        <position position="73"/>
    </location>
</feature>
<feature type="mutagenesis site" description="Complete loss of PAK2-mediated phosphorylation; when associated with A-2; A-8; A-93; and A-286." evidence="18">
    <original>T</original>
    <variation>A</variation>
    <location>
        <position position="89"/>
    </location>
</feature>
<feature type="mutagenesis site" description="Abolishes interaction with FBXW7; when associated with A-63; A-73 and A-93." evidence="10">
    <original>T</original>
    <variation>A</variation>
    <location>
        <position position="91"/>
    </location>
</feature>
<feature type="mutagenesis site" description="Abolishes interaction with FBXW7; when associated with A-63; A-73 and A-91." evidence="10">
    <original>T</original>
    <variation>A</variation>
    <location>
        <position position="93"/>
    </location>
</feature>
<feature type="mutagenesis site" description="Complete loss of PAK2-mediated phosphorylation; when associated with A-2; A-8; A-89; and A-286." evidence="18">
    <original>T</original>
    <variation>A</variation>
    <location>
        <position position="93"/>
    </location>
</feature>
<feature type="mutagenesis site" description="Abolishes phosphorylation by DYRK2. Abolishes phosphorylation by GSK3B at Thr-239." evidence="20">
    <original>S</original>
    <variation>A</variation>
    <location>
        <position position="243"/>
    </location>
</feature>
<feature type="mutagenesis site" description="Abolishes the synergistic activity with SMAD3 to activate TGF-beta-mediated transcription." evidence="6">
    <original>R</original>
    <variation>V</variation>
    <location>
        <position position="272"/>
    </location>
</feature>
<feature type="mutagenesis site" description="Complete loss of PAK2-mediated phosphorylation; when associated with A-2; A-8; A-89; and A-93." evidence="18">
    <original>T</original>
    <variation>A</variation>
    <location>
        <position position="286"/>
    </location>
</feature>
<feature type="sequence conflict" description="In Ref. 2; AA sequence." evidence="34" ref="2">
    <original>D</original>
    <variation>G</variation>
    <location>
        <position position="11"/>
    </location>
</feature>
<feature type="sequence conflict" description="In Ref. 2; AA sequence." evidence="34" ref="2">
    <original>L</original>
    <variation>F</variation>
    <location>
        <position position="14"/>
    </location>
</feature>
<feature type="sequence conflict" description="In Ref. 2; AA sequence." evidence="34" ref="2">
    <original>I</original>
    <variation>V</variation>
    <location>
        <position position="80"/>
    </location>
</feature>
<feature type="sequence conflict" description="In Ref. 3; CAG46525." evidence="34" ref="3">
    <original>A</original>
    <variation>S</variation>
    <location>
        <position position="151"/>
    </location>
</feature>
<feature type="helix" evidence="41">
    <location>
        <begin position="255"/>
        <end position="310"/>
    </location>
</feature>
<organism>
    <name type="scientific">Homo sapiens</name>
    <name type="common">Human</name>
    <dbReference type="NCBI Taxonomy" id="9606"/>
    <lineage>
        <taxon>Eukaryota</taxon>
        <taxon>Metazoa</taxon>
        <taxon>Chordata</taxon>
        <taxon>Craniata</taxon>
        <taxon>Vertebrata</taxon>
        <taxon>Euteleostomi</taxon>
        <taxon>Mammalia</taxon>
        <taxon>Eutheria</taxon>
        <taxon>Euarchontoglires</taxon>
        <taxon>Primates</taxon>
        <taxon>Haplorrhini</taxon>
        <taxon>Catarrhini</taxon>
        <taxon>Hominidae</taxon>
        <taxon>Homo</taxon>
    </lineage>
</organism>
<dbReference type="EMBL" id="J04111">
    <property type="protein sequence ID" value="AAA59197.1"/>
    <property type="molecule type" value="Genomic_DNA"/>
</dbReference>
<dbReference type="EMBL" id="CR541724">
    <property type="protein sequence ID" value="CAG46525.1"/>
    <property type="molecule type" value="mRNA"/>
</dbReference>
<dbReference type="EMBL" id="BT019759">
    <property type="protein sequence ID" value="AAV38564.1"/>
    <property type="molecule type" value="mRNA"/>
</dbReference>
<dbReference type="EMBL" id="AY217548">
    <property type="protein sequence ID" value="AAO22993.1"/>
    <property type="molecule type" value="Genomic_DNA"/>
</dbReference>
<dbReference type="EMBL" id="AL136985">
    <property type="status" value="NOT_ANNOTATED_CDS"/>
    <property type="molecule type" value="Genomic_DNA"/>
</dbReference>
<dbReference type="EMBL" id="BC002646">
    <property type="status" value="NOT_ANNOTATED_CDS"/>
    <property type="molecule type" value="mRNA"/>
</dbReference>
<dbReference type="EMBL" id="BC006175">
    <property type="protein sequence ID" value="AAH06175.1"/>
    <property type="molecule type" value="mRNA"/>
</dbReference>
<dbReference type="EMBL" id="BC009874">
    <property type="protein sequence ID" value="AAH09874.2"/>
    <property type="molecule type" value="mRNA"/>
</dbReference>
<dbReference type="EMBL" id="BC068522">
    <property type="protein sequence ID" value="AAH68522.1"/>
    <property type="molecule type" value="mRNA"/>
</dbReference>
<dbReference type="CCDS" id="CCDS610.1"/>
<dbReference type="PIR" id="A31264">
    <property type="entry name" value="TVHUJN"/>
</dbReference>
<dbReference type="RefSeq" id="NP_002219.1">
    <property type="nucleotide sequence ID" value="NM_002228.4"/>
</dbReference>
<dbReference type="PDB" id="1A02">
    <property type="method" value="X-ray"/>
    <property type="resolution" value="2.70 A"/>
    <property type="chains" value="J=253-308"/>
</dbReference>
<dbReference type="PDB" id="1FOS">
    <property type="method" value="X-ray"/>
    <property type="resolution" value="3.05 A"/>
    <property type="chains" value="F/H=254-315"/>
</dbReference>
<dbReference type="PDB" id="1JNM">
    <property type="method" value="X-ray"/>
    <property type="resolution" value="2.20 A"/>
    <property type="chains" value="A/B=254-315"/>
</dbReference>
<dbReference type="PDB" id="1JUN">
    <property type="method" value="NMR"/>
    <property type="chains" value="A/B=276-314"/>
</dbReference>
<dbReference type="PDB" id="1S9K">
    <property type="method" value="X-ray"/>
    <property type="resolution" value="3.10 A"/>
    <property type="chains" value="E=257-308"/>
</dbReference>
<dbReference type="PDB" id="1T2K">
    <property type="method" value="X-ray"/>
    <property type="resolution" value="3.00 A"/>
    <property type="chains" value="C=254-314"/>
</dbReference>
<dbReference type="PDB" id="5FV8">
    <property type="method" value="X-ray"/>
    <property type="resolution" value="1.99 A"/>
    <property type="chains" value="D/E=277-308"/>
</dbReference>
<dbReference type="PDB" id="5T01">
    <property type="method" value="X-ray"/>
    <property type="resolution" value="1.89 A"/>
    <property type="chains" value="A/B=254-315"/>
</dbReference>
<dbReference type="PDB" id="6Y3V">
    <property type="method" value="X-ray"/>
    <property type="resolution" value="1.50 A"/>
    <property type="chains" value="P=262-273"/>
</dbReference>
<dbReference type="PDB" id="8SOS">
    <property type="method" value="X-ray"/>
    <property type="resolution" value="2.33 A"/>
    <property type="chains" value="A/E=276-327"/>
</dbReference>
<dbReference type="PDBsum" id="1A02"/>
<dbReference type="PDBsum" id="1FOS"/>
<dbReference type="PDBsum" id="1JNM"/>
<dbReference type="PDBsum" id="1JUN"/>
<dbReference type="PDBsum" id="1S9K"/>
<dbReference type="PDBsum" id="1T2K"/>
<dbReference type="PDBsum" id="5FV8"/>
<dbReference type="PDBsum" id="5T01"/>
<dbReference type="PDBsum" id="6Y3V"/>
<dbReference type="PDBsum" id="8SOS"/>
<dbReference type="BMRB" id="P05412"/>
<dbReference type="SMR" id="P05412"/>
<dbReference type="BioGRID" id="109928">
    <property type="interactions" value="434"/>
</dbReference>
<dbReference type="ComplexPortal" id="CPX-480">
    <property type="entry name" value="AP-1 transcription factor complex FOS-JUN-NFATC2"/>
</dbReference>
<dbReference type="ComplexPortal" id="CPX-486">
    <property type="entry name" value="bZIP transcription factor complex, FOS-JUN"/>
</dbReference>
<dbReference type="ComplexPortal" id="CPX-490">
    <property type="entry name" value="bZIP transcription factor complex, JUN-JUN"/>
</dbReference>
<dbReference type="ComplexPortal" id="CPX-6420">
    <property type="entry name" value="bZIP transcription factor complex, ATF2-JUN"/>
</dbReference>
<dbReference type="ComplexPortal" id="CPX-6474">
    <property type="entry name" value="bZIP transcription factor complex, ATF3-JUN"/>
</dbReference>
<dbReference type="ComplexPortal" id="CPX-6562">
    <property type="entry name" value="bZIP transcription factor complex, ATF4-JUN"/>
</dbReference>
<dbReference type="ComplexPortal" id="CPX-6786">
    <property type="entry name" value="bZIP transcription factor complex, ATF7-JUN"/>
</dbReference>
<dbReference type="ComplexPortal" id="CPX-7005">
    <property type="entry name" value="bZIP transcription factor complex, BATF-JUN"/>
</dbReference>
<dbReference type="ComplexPortal" id="CPX-7063">
    <property type="entry name" value="bZIP transcription factor complex, BATF2-JUN"/>
</dbReference>
<dbReference type="ComplexPortal" id="CPX-7100">
    <property type="entry name" value="bZIP transcription factor complex, BATF3-JUN"/>
</dbReference>
<dbReference type="CORUM" id="P05412"/>
<dbReference type="DIP" id="DIP-5961N"/>
<dbReference type="ELM" id="P05412"/>
<dbReference type="FunCoup" id="P05412">
    <property type="interactions" value="4310"/>
</dbReference>
<dbReference type="IntAct" id="P05412">
    <property type="interactions" value="1431"/>
</dbReference>
<dbReference type="MINT" id="P05412"/>
<dbReference type="STRING" id="9606.ENSP00000360266"/>
<dbReference type="BindingDB" id="P05412"/>
<dbReference type="ChEMBL" id="CHEMBL4977"/>
<dbReference type="DrugBank" id="DB00210">
    <property type="generic name" value="Adapalene"/>
</dbReference>
<dbReference type="DrugBank" id="DB01169">
    <property type="generic name" value="Arsenic trioxide"/>
</dbReference>
<dbReference type="DrugBank" id="DB01029">
    <property type="generic name" value="Irbesartan"/>
</dbReference>
<dbReference type="DrugBank" id="DB05785">
    <property type="generic name" value="LGD-1550"/>
</dbReference>
<dbReference type="DrugBank" id="DB00852">
    <property type="generic name" value="Pseudoephedrine"/>
</dbReference>
<dbReference type="DrugBank" id="DB05998">
    <property type="generic name" value="T-5224"/>
</dbReference>
<dbReference type="DrugBank" id="DB00570">
    <property type="generic name" value="Vinblastine"/>
</dbReference>
<dbReference type="DrugCentral" id="P05412"/>
<dbReference type="GlyCosmos" id="P05412">
    <property type="glycosylation" value="6 sites, 2 glycans"/>
</dbReference>
<dbReference type="GlyGen" id="P05412">
    <property type="glycosylation" value="8 sites, 2 O-linked glycans (8 sites)"/>
</dbReference>
<dbReference type="iPTMnet" id="P05412"/>
<dbReference type="PhosphoSitePlus" id="P05412"/>
<dbReference type="BioMuta" id="JUN"/>
<dbReference type="DMDM" id="135298"/>
<dbReference type="CPTAC" id="CPTAC-1222"/>
<dbReference type="CPTAC" id="CPTAC-1324"/>
<dbReference type="CPTAC" id="CPTAC-3232"/>
<dbReference type="CPTAC" id="CPTAC-3233"/>
<dbReference type="CPTAC" id="CPTAC-807"/>
<dbReference type="CPTAC" id="CPTAC-927"/>
<dbReference type="jPOST" id="P05412"/>
<dbReference type="MassIVE" id="P05412"/>
<dbReference type="PaxDb" id="9606-ENSP00000360266"/>
<dbReference type="PeptideAtlas" id="P05412"/>
<dbReference type="ProteomicsDB" id="51836"/>
<dbReference type="Pumba" id="P05412"/>
<dbReference type="Antibodypedia" id="3535">
    <property type="antibodies" value="3879 antibodies from 48 providers"/>
</dbReference>
<dbReference type="CPTC" id="P05412">
    <property type="antibodies" value="6 antibodies"/>
</dbReference>
<dbReference type="DNASU" id="3725"/>
<dbReference type="Ensembl" id="ENST00000371222.4">
    <property type="protein sequence ID" value="ENSP00000360266.2"/>
    <property type="gene ID" value="ENSG00000177606.9"/>
</dbReference>
<dbReference type="Ensembl" id="ENST00000678696.1">
    <property type="protein sequence ID" value="ENSP00000503132.1"/>
    <property type="gene ID" value="ENSG00000177606.9"/>
</dbReference>
<dbReference type="GeneID" id="3725"/>
<dbReference type="KEGG" id="hsa:3725"/>
<dbReference type="MANE-Select" id="ENST00000371222.4">
    <property type="protein sequence ID" value="ENSP00000360266.2"/>
    <property type="RefSeq nucleotide sequence ID" value="NM_002228.4"/>
    <property type="RefSeq protein sequence ID" value="NP_002219.1"/>
</dbReference>
<dbReference type="UCSC" id="uc001cze.4">
    <property type="organism name" value="human"/>
</dbReference>
<dbReference type="AGR" id="HGNC:6204"/>
<dbReference type="CTD" id="3725"/>
<dbReference type="DisGeNET" id="3725"/>
<dbReference type="GeneCards" id="JUN"/>
<dbReference type="HGNC" id="HGNC:6204">
    <property type="gene designation" value="JUN"/>
</dbReference>
<dbReference type="HPA" id="ENSG00000177606">
    <property type="expression patterns" value="Low tissue specificity"/>
</dbReference>
<dbReference type="MalaCards" id="JUN"/>
<dbReference type="MIM" id="165160">
    <property type="type" value="gene"/>
</dbReference>
<dbReference type="neXtProt" id="NX_P05412"/>
<dbReference type="OpenTargets" id="ENSG00000177606"/>
<dbReference type="PharmGKB" id="PA30006"/>
<dbReference type="VEuPathDB" id="HostDB:ENSG00000177606"/>
<dbReference type="eggNOG" id="KOG0837">
    <property type="taxonomic scope" value="Eukaryota"/>
</dbReference>
<dbReference type="GeneTree" id="ENSGT00940000162061"/>
<dbReference type="HOGENOM" id="CLU_057007_0_0_1"/>
<dbReference type="InParanoid" id="P05412"/>
<dbReference type="OMA" id="HHQHMPA"/>
<dbReference type="OrthoDB" id="2187714at2759"/>
<dbReference type="PAN-GO" id="P05412">
    <property type="GO annotations" value="7 GO annotations based on evolutionary models"/>
</dbReference>
<dbReference type="PhylomeDB" id="P05412"/>
<dbReference type="TreeFam" id="TF323952"/>
<dbReference type="PathwayCommons" id="P05412"/>
<dbReference type="Reactome" id="R-HSA-1912408">
    <property type="pathway name" value="Pre-NOTCH Transcription and Translation"/>
</dbReference>
<dbReference type="Reactome" id="R-HSA-2559580">
    <property type="pathway name" value="Oxidative Stress Induced Senescence"/>
</dbReference>
<dbReference type="Reactome" id="R-HSA-2559582">
    <property type="pathway name" value="Senescence-Associated Secretory Phenotype (SASP)"/>
</dbReference>
<dbReference type="Reactome" id="R-HSA-2871796">
    <property type="pathway name" value="FCERI mediated MAPK activation"/>
</dbReference>
<dbReference type="Reactome" id="R-HSA-450341">
    <property type="pathway name" value="Activation of the AP-1 family of transcription factors"/>
</dbReference>
<dbReference type="Reactome" id="R-HSA-5617472">
    <property type="pathway name" value="Activation of anterior HOX genes in hindbrain development during early embryogenesis"/>
</dbReference>
<dbReference type="Reactome" id="R-HSA-5687128">
    <property type="pathway name" value="MAPK6/MAPK4 signaling"/>
</dbReference>
<dbReference type="Reactome" id="R-HSA-6796648">
    <property type="pathway name" value="TP53 Regulates Transcription of DNA Repair Genes"/>
</dbReference>
<dbReference type="Reactome" id="R-HSA-8862803">
    <property type="pathway name" value="Deregulated CDK5 triggers multiple neurodegenerative pathways in Alzheimer's disease models"/>
</dbReference>
<dbReference type="Reactome" id="R-HSA-8943724">
    <property type="pathway name" value="Regulation of PTEN gene transcription"/>
</dbReference>
<dbReference type="Reactome" id="R-HSA-9018519">
    <property type="pathway name" value="Estrogen-dependent gene expression"/>
</dbReference>
<dbReference type="Reactome" id="R-HSA-9673324">
    <property type="pathway name" value="WNT5:FZD7-mediated leishmania damping"/>
</dbReference>
<dbReference type="Reactome" id="R-HSA-9725370">
    <property type="pathway name" value="Signaling by ALK fusions and activated point mutants"/>
</dbReference>
<dbReference type="SignaLink" id="P05412"/>
<dbReference type="SIGNOR" id="P05412"/>
<dbReference type="BioGRID-ORCS" id="3725">
    <property type="hits" value="147 hits in 1201 CRISPR screens"/>
</dbReference>
<dbReference type="ChiTaRS" id="JUN">
    <property type="organism name" value="human"/>
</dbReference>
<dbReference type="EvolutionaryTrace" id="P05412"/>
<dbReference type="GeneWiki" id="C-jun"/>
<dbReference type="GenomeRNAi" id="3725"/>
<dbReference type="Pharos" id="P05412">
    <property type="development level" value="Tchem"/>
</dbReference>
<dbReference type="PRO" id="PR:P05412"/>
<dbReference type="Proteomes" id="UP000005640">
    <property type="component" value="Chromosome 1"/>
</dbReference>
<dbReference type="RNAct" id="P05412">
    <property type="molecule type" value="protein"/>
</dbReference>
<dbReference type="Bgee" id="ENSG00000177606">
    <property type="expression patterns" value="Expressed in vena cava and 207 other cell types or tissues"/>
</dbReference>
<dbReference type="GO" id="GO:0000785">
    <property type="term" value="C:chromatin"/>
    <property type="evidence" value="ECO:0000314"/>
    <property type="project" value="UniProt"/>
</dbReference>
<dbReference type="GO" id="GO:0000791">
    <property type="term" value="C:euchromatin"/>
    <property type="evidence" value="ECO:0000314"/>
    <property type="project" value="BHF-UCL"/>
</dbReference>
<dbReference type="GO" id="GO:0000228">
    <property type="term" value="C:nuclear chromosome"/>
    <property type="evidence" value="ECO:0000304"/>
    <property type="project" value="ProtInc"/>
</dbReference>
<dbReference type="GO" id="GO:0005654">
    <property type="term" value="C:nucleoplasm"/>
    <property type="evidence" value="ECO:0000314"/>
    <property type="project" value="HPA"/>
</dbReference>
<dbReference type="GO" id="GO:0005634">
    <property type="term" value="C:nucleus"/>
    <property type="evidence" value="ECO:0000314"/>
    <property type="project" value="ParkinsonsUK-UCL"/>
</dbReference>
<dbReference type="GO" id="GO:0090575">
    <property type="term" value="C:RNA polymerase II transcription regulator complex"/>
    <property type="evidence" value="ECO:0000353"/>
    <property type="project" value="ComplexPortal"/>
</dbReference>
<dbReference type="GO" id="GO:0035976">
    <property type="term" value="C:transcription factor AP-1 complex"/>
    <property type="evidence" value="ECO:0000314"/>
    <property type="project" value="CAFA"/>
</dbReference>
<dbReference type="GO" id="GO:0005667">
    <property type="term" value="C:transcription regulator complex"/>
    <property type="evidence" value="ECO:0000318"/>
    <property type="project" value="GO_Central"/>
</dbReference>
<dbReference type="GO" id="GO:0017053">
    <property type="term" value="C:transcription repressor complex"/>
    <property type="evidence" value="ECO:0007669"/>
    <property type="project" value="Ensembl"/>
</dbReference>
<dbReference type="GO" id="GO:0035497">
    <property type="term" value="F:cAMP response element binding"/>
    <property type="evidence" value="ECO:0000314"/>
    <property type="project" value="BHF-UCL"/>
</dbReference>
<dbReference type="GO" id="GO:0003682">
    <property type="term" value="F:chromatin binding"/>
    <property type="evidence" value="ECO:0007669"/>
    <property type="project" value="Ensembl"/>
</dbReference>
<dbReference type="GO" id="GO:0003677">
    <property type="term" value="F:DNA binding"/>
    <property type="evidence" value="ECO:0000304"/>
    <property type="project" value="ProtInc"/>
</dbReference>
<dbReference type="GO" id="GO:0001228">
    <property type="term" value="F:DNA-binding transcription activator activity, RNA polymerase II-specific"/>
    <property type="evidence" value="ECO:0000314"/>
    <property type="project" value="BHF-UCL"/>
</dbReference>
<dbReference type="GO" id="GO:0003700">
    <property type="term" value="F:DNA-binding transcription factor activity"/>
    <property type="evidence" value="ECO:0000314"/>
    <property type="project" value="BHF-UCL"/>
</dbReference>
<dbReference type="GO" id="GO:0000981">
    <property type="term" value="F:DNA-binding transcription factor activity, RNA polymerase II-specific"/>
    <property type="evidence" value="ECO:0000314"/>
    <property type="project" value="UniProtKB"/>
</dbReference>
<dbReference type="GO" id="GO:0001227">
    <property type="term" value="F:DNA-binding transcription repressor activity, RNA polymerase II-specific"/>
    <property type="evidence" value="ECO:0000314"/>
    <property type="project" value="ARUK-UCL"/>
</dbReference>
<dbReference type="GO" id="GO:0019899">
    <property type="term" value="F:enzyme binding"/>
    <property type="evidence" value="ECO:0000353"/>
    <property type="project" value="UniProtKB"/>
</dbReference>
<dbReference type="GO" id="GO:0140296">
    <property type="term" value="F:general transcription initiation factor binding"/>
    <property type="evidence" value="ECO:0000353"/>
    <property type="project" value="UniProtKB"/>
</dbReference>
<dbReference type="GO" id="GO:0005096">
    <property type="term" value="F:GTPase activator activity"/>
    <property type="evidence" value="ECO:0000314"/>
    <property type="project" value="UniProtKB"/>
</dbReference>
<dbReference type="GO" id="GO:0042802">
    <property type="term" value="F:identical protein binding"/>
    <property type="evidence" value="ECO:0000353"/>
    <property type="project" value="IntAct"/>
</dbReference>
<dbReference type="GO" id="GO:0070412">
    <property type="term" value="F:R-SMAD binding"/>
    <property type="evidence" value="ECO:0000353"/>
    <property type="project" value="BHF-UCL"/>
</dbReference>
<dbReference type="GO" id="GO:0003723">
    <property type="term" value="F:RNA binding"/>
    <property type="evidence" value="ECO:0007005"/>
    <property type="project" value="UniProtKB"/>
</dbReference>
<dbReference type="GO" id="GO:0000978">
    <property type="term" value="F:RNA polymerase II cis-regulatory region sequence-specific DNA binding"/>
    <property type="evidence" value="ECO:0000314"/>
    <property type="project" value="BHF-UCL"/>
</dbReference>
<dbReference type="GO" id="GO:0061629">
    <property type="term" value="F:RNA polymerase II-specific DNA-binding transcription factor binding"/>
    <property type="evidence" value="ECO:0000353"/>
    <property type="project" value="CAFA"/>
</dbReference>
<dbReference type="GO" id="GO:1990837">
    <property type="term" value="F:sequence-specific double-stranded DNA binding"/>
    <property type="evidence" value="ECO:0000314"/>
    <property type="project" value="ARUK-UCL"/>
</dbReference>
<dbReference type="GO" id="GO:0000976">
    <property type="term" value="F:transcription cis-regulatory region binding"/>
    <property type="evidence" value="ECO:0000314"/>
    <property type="project" value="UniProtKB"/>
</dbReference>
<dbReference type="GO" id="GO:0031625">
    <property type="term" value="F:ubiquitin protein ligase binding"/>
    <property type="evidence" value="ECO:0000353"/>
    <property type="project" value="UniProtKB"/>
</dbReference>
<dbReference type="GO" id="GO:0044389">
    <property type="term" value="F:ubiquitin-like protein ligase binding"/>
    <property type="evidence" value="ECO:0000353"/>
    <property type="project" value="UniProtKB"/>
</dbReference>
<dbReference type="GO" id="GO:0001525">
    <property type="term" value="P:angiogenesis"/>
    <property type="evidence" value="ECO:0007669"/>
    <property type="project" value="Ensembl"/>
</dbReference>
<dbReference type="GO" id="GO:0006915">
    <property type="term" value="P:apoptotic process"/>
    <property type="evidence" value="ECO:0007669"/>
    <property type="project" value="Ensembl"/>
</dbReference>
<dbReference type="GO" id="GO:0031103">
    <property type="term" value="P:axon regeneration"/>
    <property type="evidence" value="ECO:0007669"/>
    <property type="project" value="Ensembl"/>
</dbReference>
<dbReference type="GO" id="GO:0008283">
    <property type="term" value="P:cell population proliferation"/>
    <property type="evidence" value="ECO:0007669"/>
    <property type="project" value="Ensembl"/>
</dbReference>
<dbReference type="GO" id="GO:0072740">
    <property type="term" value="P:cellular response to anisomycin"/>
    <property type="evidence" value="ECO:0007669"/>
    <property type="project" value="Ensembl"/>
</dbReference>
<dbReference type="GO" id="GO:0071277">
    <property type="term" value="P:cellular response to calcium ion"/>
    <property type="evidence" value="ECO:0007669"/>
    <property type="project" value="Ensembl"/>
</dbReference>
<dbReference type="GO" id="GO:0061029">
    <property type="term" value="P:eyelid development in camera-type eye"/>
    <property type="evidence" value="ECO:0007669"/>
    <property type="project" value="Ensembl"/>
</dbReference>
<dbReference type="GO" id="GO:0140467">
    <property type="term" value="P:integrated stress response signaling"/>
    <property type="evidence" value="ECO:0000303"/>
    <property type="project" value="ComplexPortal"/>
</dbReference>
<dbReference type="GO" id="GO:0007254">
    <property type="term" value="P:JNK cascade"/>
    <property type="evidence" value="ECO:0000250"/>
    <property type="project" value="BHF-UCL"/>
</dbReference>
<dbReference type="GO" id="GO:0035026">
    <property type="term" value="P:leading edge cell differentiation"/>
    <property type="evidence" value="ECO:0007669"/>
    <property type="project" value="Ensembl"/>
</dbReference>
<dbReference type="GO" id="GO:0001889">
    <property type="term" value="P:liver development"/>
    <property type="evidence" value="ECO:0007669"/>
    <property type="project" value="Ensembl"/>
</dbReference>
<dbReference type="GO" id="GO:0001774">
    <property type="term" value="P:microglial cell activation"/>
    <property type="evidence" value="ECO:0007669"/>
    <property type="project" value="Ensembl"/>
</dbReference>
<dbReference type="GO" id="GO:0030224">
    <property type="term" value="P:monocyte differentiation"/>
    <property type="evidence" value="ECO:0007669"/>
    <property type="project" value="Ensembl"/>
</dbReference>
<dbReference type="GO" id="GO:0043922">
    <property type="term" value="P:negative regulation by host of viral transcription"/>
    <property type="evidence" value="ECO:0000314"/>
    <property type="project" value="UniProtKB"/>
</dbReference>
<dbReference type="GO" id="GO:0008285">
    <property type="term" value="P:negative regulation of cell population proliferation"/>
    <property type="evidence" value="ECO:0007669"/>
    <property type="project" value="Ensembl"/>
</dbReference>
<dbReference type="GO" id="GO:0043392">
    <property type="term" value="P:negative regulation of DNA binding"/>
    <property type="evidence" value="ECO:0000314"/>
    <property type="project" value="UniProtKB"/>
</dbReference>
<dbReference type="GO" id="GO:0045892">
    <property type="term" value="P:negative regulation of DNA-templated transcription"/>
    <property type="evidence" value="ECO:0000314"/>
    <property type="project" value="UniProtKB"/>
</dbReference>
<dbReference type="GO" id="GO:0043524">
    <property type="term" value="P:negative regulation of neuron apoptotic process"/>
    <property type="evidence" value="ECO:0007669"/>
    <property type="project" value="Ensembl"/>
</dbReference>
<dbReference type="GO" id="GO:0000122">
    <property type="term" value="P:negative regulation of transcription by RNA polymerase II"/>
    <property type="evidence" value="ECO:0000314"/>
    <property type="project" value="ARUK-UCL"/>
</dbReference>
<dbReference type="GO" id="GO:0003151">
    <property type="term" value="P:outflow tract morphogenesis"/>
    <property type="evidence" value="ECO:0007669"/>
    <property type="project" value="Ensembl"/>
</dbReference>
<dbReference type="GO" id="GO:0043923">
    <property type="term" value="P:positive regulation by host of viral transcription"/>
    <property type="evidence" value="ECO:0000314"/>
    <property type="project" value="UniProtKB"/>
</dbReference>
<dbReference type="GO" id="GO:0043065">
    <property type="term" value="P:positive regulation of apoptotic process"/>
    <property type="evidence" value="ECO:0000315"/>
    <property type="project" value="CAFA"/>
</dbReference>
<dbReference type="GO" id="GO:0045893">
    <property type="term" value="P:positive regulation of DNA-templated transcription"/>
    <property type="evidence" value="ECO:0000314"/>
    <property type="project" value="UniProtKB"/>
</dbReference>
<dbReference type="GO" id="GO:2000144">
    <property type="term" value="P:positive regulation of DNA-templated transcription initiation"/>
    <property type="evidence" value="ECO:0000314"/>
    <property type="project" value="CACAO"/>
</dbReference>
<dbReference type="GO" id="GO:0001938">
    <property type="term" value="P:positive regulation of endothelial cell proliferation"/>
    <property type="evidence" value="ECO:0007669"/>
    <property type="project" value="Ensembl"/>
</dbReference>
<dbReference type="GO" id="GO:0010634">
    <property type="term" value="P:positive regulation of epithelial cell migration"/>
    <property type="evidence" value="ECO:0007669"/>
    <property type="project" value="Ensembl"/>
</dbReference>
<dbReference type="GO" id="GO:0070374">
    <property type="term" value="P:positive regulation of ERK1 and ERK2 cascade"/>
    <property type="evidence" value="ECO:0007669"/>
    <property type="project" value="Ensembl"/>
</dbReference>
<dbReference type="GO" id="GO:0048146">
    <property type="term" value="P:positive regulation of fibroblast proliferation"/>
    <property type="evidence" value="ECO:0007669"/>
    <property type="project" value="Ensembl"/>
</dbReference>
<dbReference type="GO" id="GO:1902895">
    <property type="term" value="P:positive regulation of miRNA transcription"/>
    <property type="evidence" value="ECO:0000315"/>
    <property type="project" value="BHF-UCL"/>
</dbReference>
<dbReference type="GO" id="GO:0045944">
    <property type="term" value="P:positive regulation of transcription by RNA polymerase II"/>
    <property type="evidence" value="ECO:0000314"/>
    <property type="project" value="UniProtKB"/>
</dbReference>
<dbReference type="GO" id="GO:1904707">
    <property type="term" value="P:positive regulation of vascular associated smooth muscle cell proliferation"/>
    <property type="evidence" value="ECO:0000315"/>
    <property type="project" value="BHF-UCL"/>
</dbReference>
<dbReference type="GO" id="GO:0051726">
    <property type="term" value="P:regulation of cell cycle"/>
    <property type="evidence" value="ECO:0000318"/>
    <property type="project" value="GO_Central"/>
</dbReference>
<dbReference type="GO" id="GO:0042127">
    <property type="term" value="P:regulation of cell population proliferation"/>
    <property type="evidence" value="ECO:0000318"/>
    <property type="project" value="GO_Central"/>
</dbReference>
<dbReference type="GO" id="GO:0006357">
    <property type="term" value="P:regulation of transcription by RNA polymerase II"/>
    <property type="evidence" value="ECO:0000314"/>
    <property type="project" value="ComplexPortal"/>
</dbReference>
<dbReference type="GO" id="GO:0019046">
    <property type="term" value="P:release from viral latency"/>
    <property type="evidence" value="ECO:0000314"/>
    <property type="project" value="UniProt"/>
</dbReference>
<dbReference type="GO" id="GO:0034976">
    <property type="term" value="P:response to endoplasmic reticulum stress"/>
    <property type="evidence" value="ECO:0000315"/>
    <property type="project" value="ParkinsonsUK-UCL"/>
</dbReference>
<dbReference type="GO" id="GO:0035994">
    <property type="term" value="P:response to muscle stretch"/>
    <property type="evidence" value="ECO:0007669"/>
    <property type="project" value="Ensembl"/>
</dbReference>
<dbReference type="GO" id="GO:0048545">
    <property type="term" value="P:response to steroid hormone"/>
    <property type="evidence" value="ECO:0000318"/>
    <property type="project" value="GO_Central"/>
</dbReference>
<dbReference type="GO" id="GO:0009410">
    <property type="term" value="P:response to xenobiotic stimulus"/>
    <property type="evidence" value="ECO:0007669"/>
    <property type="project" value="Ensembl"/>
</dbReference>
<dbReference type="GO" id="GO:0060395">
    <property type="term" value="P:SMAD protein signal transduction"/>
    <property type="evidence" value="ECO:0000314"/>
    <property type="project" value="BHF-UCL"/>
</dbReference>
<dbReference type="GO" id="GO:0007179">
    <property type="term" value="P:transforming growth factor beta receptor signaling pathway"/>
    <property type="evidence" value="ECO:0000314"/>
    <property type="project" value="BHF-UCL"/>
</dbReference>
<dbReference type="CDD" id="cd14696">
    <property type="entry name" value="bZIP_Jun"/>
    <property type="match status" value="1"/>
</dbReference>
<dbReference type="FunFam" id="1.20.5.170:FF:000012">
    <property type="entry name" value="Putative transcription factor AP-1"/>
    <property type="match status" value="1"/>
</dbReference>
<dbReference type="Gene3D" id="1.20.5.170">
    <property type="match status" value="1"/>
</dbReference>
<dbReference type="IDEAL" id="IID00437"/>
<dbReference type="InterPro" id="IPR050946">
    <property type="entry name" value="AP-1_TF_bZIP"/>
</dbReference>
<dbReference type="InterPro" id="IPR004827">
    <property type="entry name" value="bZIP"/>
</dbReference>
<dbReference type="InterPro" id="IPR046347">
    <property type="entry name" value="bZIP_sf"/>
</dbReference>
<dbReference type="InterPro" id="IPR005643">
    <property type="entry name" value="JNK"/>
</dbReference>
<dbReference type="InterPro" id="IPR002112">
    <property type="entry name" value="Leuzip_Jun"/>
</dbReference>
<dbReference type="InterPro" id="IPR008917">
    <property type="entry name" value="TF_DNA-bd_sf"/>
</dbReference>
<dbReference type="PANTHER" id="PTHR11462">
    <property type="entry name" value="JUN TRANSCRIPTION FACTOR-RELATED"/>
    <property type="match status" value="1"/>
</dbReference>
<dbReference type="PANTHER" id="PTHR11462:SF8">
    <property type="entry name" value="TRANSCRIPTION FACTOR JUN"/>
    <property type="match status" value="1"/>
</dbReference>
<dbReference type="Pfam" id="PF00170">
    <property type="entry name" value="bZIP_1"/>
    <property type="match status" value="1"/>
</dbReference>
<dbReference type="Pfam" id="PF03957">
    <property type="entry name" value="Jun"/>
    <property type="match status" value="1"/>
</dbReference>
<dbReference type="PRINTS" id="PR00043">
    <property type="entry name" value="LEUZIPPRJUN"/>
</dbReference>
<dbReference type="SMART" id="SM00338">
    <property type="entry name" value="BRLZ"/>
    <property type="match status" value="1"/>
</dbReference>
<dbReference type="SUPFAM" id="SSF47454">
    <property type="entry name" value="A DNA-binding domain in eukaryotic transcription factors"/>
    <property type="match status" value="1"/>
</dbReference>
<dbReference type="SUPFAM" id="SSF57959">
    <property type="entry name" value="Leucine zipper domain"/>
    <property type="match status" value="1"/>
</dbReference>
<dbReference type="PROSITE" id="PS50217">
    <property type="entry name" value="BZIP"/>
    <property type="match status" value="1"/>
</dbReference>
<dbReference type="PROSITE" id="PS00036">
    <property type="entry name" value="BZIP_BASIC"/>
    <property type="match status" value="1"/>
</dbReference>
<gene>
    <name type="primary">JUN</name>
</gene>
<sequence length="331" mass="35676">MTAKMETTFYDDALNASFLPSESGPYGYSNPKILKQSMTLNLADPVGSLKPHLRAKNSDLLTSPDVGLLKLASPELERLIIQSSNGHITTTPTPTQFLCPKNVTDEQEGFAEGFVRALAELHSQNTLPSVTSAAQPVNGAGMVAPAVASVAGGSGSGGFSASLHSEPPVYANLSNFNPGALSSGGGAPSYGAAGLAFPAQPQQQQQPPHHLPQQMPVQHPRLQALKEEPQTVPEMPGETPPLSPIDMESQERIKAERKRMRNRIAASKCRKRKLERIARLEEKVKTLKAQNSELASTANMLREQVAQLKQKVMNHVNSGCQLMLTQQLQTF</sequence>
<name>JUN_HUMAN</name>
<protein>
    <recommendedName>
        <fullName evidence="34">Transcription factor Jun</fullName>
    </recommendedName>
    <alternativeName>
        <fullName>Activator protein 1</fullName>
        <shortName>AP1</shortName>
    </alternativeName>
    <alternativeName>
        <fullName>Proto-oncogene c-Jun</fullName>
    </alternativeName>
    <alternativeName>
        <fullName evidence="34">Transcription factor AP-1 subunit Jun</fullName>
    </alternativeName>
    <alternativeName>
        <fullName>V-jun avian sarcoma virus 17 oncogene homolog</fullName>
    </alternativeName>
    <alternativeName>
        <fullName>p39</fullName>
    </alternativeName>
</protein>